<name>RS16_ECOLI</name>
<gene>
    <name evidence="1" type="primary">rpsP</name>
    <name type="ordered locus">b2609</name>
    <name type="ordered locus">JW2590</name>
</gene>
<proteinExistence type="evidence at protein level"/>
<organism>
    <name type="scientific">Escherichia coli (strain K12)</name>
    <dbReference type="NCBI Taxonomy" id="83333"/>
    <lineage>
        <taxon>Bacteria</taxon>
        <taxon>Pseudomonadati</taxon>
        <taxon>Pseudomonadota</taxon>
        <taxon>Gammaproteobacteria</taxon>
        <taxon>Enterobacterales</taxon>
        <taxon>Enterobacteriaceae</taxon>
        <taxon>Escherichia</taxon>
    </lineage>
</organism>
<keyword id="KW-0002">3D-structure</keyword>
<keyword id="KW-0903">Direct protein sequencing</keyword>
<keyword id="KW-0255">Endonuclease</keyword>
<keyword id="KW-0378">Hydrolase</keyword>
<keyword id="KW-0540">Nuclease</keyword>
<keyword id="KW-1185">Reference proteome</keyword>
<keyword id="KW-0687">Ribonucleoprotein</keyword>
<keyword id="KW-0689">Ribosomal protein</keyword>
<accession>P0A7T3</accession>
<accession>P02372</accession>
<accession>P77006</accession>
<reference key="1">
    <citation type="journal article" date="1977" name="Hoppe-Seyler's Z. Physiol. Chem.">
        <title>The complete amino acid sequence of protein S16 from Escherichia coli.</title>
        <authorList>
            <person name="Vandekerckhove J."/>
            <person name="Rombauts W."/>
            <person name="Wittmann-Liebold B."/>
        </authorList>
    </citation>
    <scope>PROTEIN SEQUENCE</scope>
    <scope>SUBUNIT</scope>
    <source>
        <strain>K</strain>
    </source>
</reference>
<reference key="2">
    <citation type="journal article" date="1983" name="EMBO J.">
        <title>The nucleotide sequence of an Escherichia coli operon containing genes for the tRNA(m1G)methyltransferase, the ribosomal proteins S16 and L19 and a 21-K polypeptide.</title>
        <authorList>
            <person name="Bystroem A.S."/>
            <person name="Hjalmarsson K.J."/>
            <person name="Wikstroem P.M."/>
            <person name="Bjoerk G.R."/>
        </authorList>
    </citation>
    <scope>NUCLEOTIDE SEQUENCE [GENOMIC DNA]</scope>
    <scope>OPERON STRUCTURE</scope>
    <source>
        <strain>K12</strain>
    </source>
</reference>
<reference key="3">
    <citation type="journal article" date="1997" name="DNA Res.">
        <title>Construction of a contiguous 874-kb sequence of the Escherichia coli-K12 genome corresponding to 50.0-68.8 min on the linkage map and analysis of its sequence features.</title>
        <authorList>
            <person name="Yamamoto Y."/>
            <person name="Aiba H."/>
            <person name="Baba T."/>
            <person name="Hayashi K."/>
            <person name="Inada T."/>
            <person name="Isono K."/>
            <person name="Itoh T."/>
            <person name="Kimura S."/>
            <person name="Kitagawa M."/>
            <person name="Makino K."/>
            <person name="Miki T."/>
            <person name="Mitsuhashi N."/>
            <person name="Mizobuchi K."/>
            <person name="Mori H."/>
            <person name="Nakade S."/>
            <person name="Nakamura Y."/>
            <person name="Nashimoto H."/>
            <person name="Oshima T."/>
            <person name="Oyama S."/>
            <person name="Saito N."/>
            <person name="Sampei G."/>
            <person name="Satoh Y."/>
            <person name="Sivasundaram S."/>
            <person name="Tagami H."/>
            <person name="Takahashi H."/>
            <person name="Takeda J."/>
            <person name="Takemoto K."/>
            <person name="Uehara K."/>
            <person name="Wada C."/>
            <person name="Yamagata S."/>
            <person name="Horiuchi T."/>
        </authorList>
    </citation>
    <scope>NUCLEOTIDE SEQUENCE [LARGE SCALE GENOMIC DNA]</scope>
    <source>
        <strain>K12 / W3110 / ATCC 27325 / DSM 5911</strain>
    </source>
</reference>
<reference key="4">
    <citation type="journal article" date="1997" name="Science">
        <title>The complete genome sequence of Escherichia coli K-12.</title>
        <authorList>
            <person name="Blattner F.R."/>
            <person name="Plunkett G. III"/>
            <person name="Bloch C.A."/>
            <person name="Perna N.T."/>
            <person name="Burland V."/>
            <person name="Riley M."/>
            <person name="Collado-Vides J."/>
            <person name="Glasner J.D."/>
            <person name="Rode C.K."/>
            <person name="Mayhew G.F."/>
            <person name="Gregor J."/>
            <person name="Davis N.W."/>
            <person name="Kirkpatrick H.A."/>
            <person name="Goeden M.A."/>
            <person name="Rose D.J."/>
            <person name="Mau B."/>
            <person name="Shao Y."/>
        </authorList>
    </citation>
    <scope>NUCLEOTIDE SEQUENCE [LARGE SCALE GENOMIC DNA]</scope>
    <source>
        <strain>K12 / MG1655 / ATCC 47076</strain>
    </source>
</reference>
<reference key="5">
    <citation type="journal article" date="2006" name="Mol. Syst. Biol.">
        <title>Highly accurate genome sequences of Escherichia coli K-12 strains MG1655 and W3110.</title>
        <authorList>
            <person name="Hayashi K."/>
            <person name="Morooka N."/>
            <person name="Yamamoto Y."/>
            <person name="Fujita K."/>
            <person name="Isono K."/>
            <person name="Choi S."/>
            <person name="Ohtsubo E."/>
            <person name="Baba T."/>
            <person name="Wanner B.L."/>
            <person name="Mori H."/>
            <person name="Horiuchi T."/>
        </authorList>
    </citation>
    <scope>NUCLEOTIDE SEQUENCE [LARGE SCALE GENOMIC DNA]</scope>
    <scope>SEQUENCE REVISION</scope>
    <source>
        <strain>K12 / W3110 / ATCC 27325 / DSM 5911</strain>
    </source>
</reference>
<reference key="6">
    <citation type="journal article" date="1996" name="Mol. Microbiol.">
        <title>The Escherichia coli ribosomal protein S16 is an endonuclease.</title>
        <authorList>
            <person name="Oberto J."/>
            <person name="Bonnefoy E."/>
            <person name="Mouay E."/>
            <person name="Pellegrini O."/>
            <person name="Wilkstroem P.M."/>
            <person name="Rouviere-Yaniv J."/>
        </authorList>
    </citation>
    <scope>PROTEIN SEQUENCE OF 1-15</scope>
    <scope>FUNCTION AS AN ENDONUCLEASE</scope>
</reference>
<reference key="7">
    <citation type="journal article" date="1997" name="Electrophoresis">
        <title>Comparing the predicted and observed properties of proteins encoded in the genome of Escherichia coli K-12.</title>
        <authorList>
            <person name="Link A.J."/>
            <person name="Robison K."/>
            <person name="Church G.M."/>
        </authorList>
    </citation>
    <scope>PROTEIN SEQUENCE OF 1-12</scope>
    <source>
        <strain>K12 / EMG2</strain>
    </source>
</reference>
<reference key="8">
    <citation type="journal article" date="1997" name="Electrophoresis">
        <title>Escherichia coli proteome analysis using the gene-protein database.</title>
        <authorList>
            <person name="VanBogelen R.A."/>
            <person name="Abshire K.Z."/>
            <person name="Moldover B."/>
            <person name="Olson E.R."/>
            <person name="Neidhardt F.C."/>
        </authorList>
    </citation>
    <scope>IDENTIFICATION BY 2D-GEL</scope>
</reference>
<reference key="9">
    <citation type="journal article" date="2001" name="J. Bacteriol.">
        <title>Hybrid protein between ribosomal protein S16 and RimM of Escherichia coli retains the ribosome maturation function of both proteins.</title>
        <authorList>
            <person name="Loevgren J.M."/>
            <person name="Wikstroem P.M."/>
        </authorList>
    </citation>
    <scope>FUSION WITH RIBOSOME MATURATION FACTOR RIMM</scope>
    <source>
        <strain>MW100</strain>
    </source>
</reference>
<reference key="10">
    <citation type="journal article" date="1999" name="Anal. Biochem.">
        <title>Observation of Escherichia coli ribosomal proteins and their posttranslational modifications by mass spectrometry.</title>
        <authorList>
            <person name="Arnold R.J."/>
            <person name="Reilly J.P."/>
        </authorList>
    </citation>
    <scope>MASS SPECTROMETRY</scope>
    <scope>SUBUNIT</scope>
    <source>
        <strain>K12 / ATCC 25404 / DSM 5698 / NCIMB 11290</strain>
    </source>
</reference>
<reference key="11">
    <citation type="journal article" date="2014" name="Curr. Opin. Struct. Biol.">
        <title>A new system for naming ribosomal proteins.</title>
        <authorList>
            <person name="Ban N."/>
            <person name="Beckmann R."/>
            <person name="Cate J.H.D."/>
            <person name="Dinman J.D."/>
            <person name="Dragon F."/>
            <person name="Ellis S.R."/>
            <person name="Lafontaine D.L.J."/>
            <person name="Lindahl L."/>
            <person name="Liljas A."/>
            <person name="Lipton J.M."/>
            <person name="McAlear M.A."/>
            <person name="Moore P.B."/>
            <person name="Noller H.F."/>
            <person name="Ortega J."/>
            <person name="Panse V.G."/>
            <person name="Ramakrishnan V."/>
            <person name="Spahn C.M.T."/>
            <person name="Steitz T.A."/>
            <person name="Tchorzewski M."/>
            <person name="Tollervey D."/>
            <person name="Warren A.J."/>
            <person name="Williamson J.R."/>
            <person name="Wilson D."/>
            <person name="Yonath A."/>
            <person name="Yusupov M."/>
        </authorList>
    </citation>
    <scope>NOMENCLATURE</scope>
</reference>
<reference key="12">
    <citation type="journal article" date="2002" name="Nat. Struct. Biol.">
        <title>All-atom homology model of the Escherichia coli 30S ribosomal subunit.</title>
        <authorList>
            <person name="Tung C.-S."/>
            <person name="Joseph S."/>
            <person name="Sanbonmatsu K.Y."/>
        </authorList>
    </citation>
    <scope>3D-STRUCTURE MODELING</scope>
    <scope>SUBUNIT</scope>
</reference>
<reference key="13">
    <citation type="journal article" date="2003" name="Cell">
        <title>Study of the structural dynamics of the E. coli 70S ribosome using real-space refinement.</title>
        <authorList>
            <person name="Gao H."/>
            <person name="Sengupta J."/>
            <person name="Valle M."/>
            <person name="Korostelev A."/>
            <person name="Eswar N."/>
            <person name="Stagg S.M."/>
            <person name="Van Roey P."/>
            <person name="Agrawal R.K."/>
            <person name="Harvey S.C."/>
            <person name="Sali A."/>
            <person name="Chapman M.S."/>
            <person name="Frank J."/>
        </authorList>
    </citation>
    <scope>STRUCTURE BY ELECTRON MICROSCOPY (11.50 ANGSTROMS)</scope>
    <scope>SUBUNIT</scope>
    <source>
        <strain>MRE-600</strain>
    </source>
</reference>
<reference key="14">
    <citation type="journal article" date="2005" name="Science">
        <title>Structures of the bacterial ribosome at 3.5 A resolution.</title>
        <authorList>
            <person name="Schuwirth B.S."/>
            <person name="Borovinskaya M.A."/>
            <person name="Hau C.W."/>
            <person name="Zhang W."/>
            <person name="Vila-Sanjurjo A."/>
            <person name="Holton J.M."/>
            <person name="Cate J.H.D."/>
        </authorList>
    </citation>
    <scope>X-RAY CRYSTALLOGRAPHY (3.46 ANGSTROMS) OF 2 DIFFERENT RIBOSOME STRUCTURES</scope>
    <scope>SUBUNIT</scope>
    <source>
        <strain>MRE-600</strain>
    </source>
</reference>
<reference key="15">
    <citation type="journal article" date="2017" name="Nature">
        <title>Mechanistic insights into the alternative translation termination by ArfA and RF2.</title>
        <authorList>
            <person name="Ma C."/>
            <person name="Kurita D."/>
            <person name="Li N."/>
            <person name="Chen Y."/>
            <person name="Himeno H."/>
            <person name="Gao N."/>
        </authorList>
    </citation>
    <scope>STRUCTURE BY ELECTRON MICROSCOPY (3.0 ANGSTROMS) OF 70S RIBOSOME IN COMPLEX WITH ARFA AND RF2</scope>
    <scope>SUBUNIT</scope>
</reference>
<reference key="16">
    <citation type="journal article" date="2017" name="Nature">
        <title>Structural basis for ArfA-RF2-mediated translation termination on mRNAs lacking stop codons.</title>
        <authorList>
            <person name="Huter P."/>
            <person name="Mueller C."/>
            <person name="Beckert B."/>
            <person name="Arenz S."/>
            <person name="Berninghausen O."/>
            <person name="Beckmann R."/>
            <person name="Wilson D.N."/>
        </authorList>
    </citation>
    <scope>STRUCTURE BY ELECTRON MICROSCOPY (3.1 ANGSTROMS) OF 70S RIBOSOME IN COMPLEX WITH ARFA AND RF2</scope>
    <scope>SUBUNIT</scope>
</reference>
<reference key="17">
    <citation type="journal article" date="2016" name="Science">
        <title>Translational termination without a stop codon.</title>
        <authorList>
            <person name="James N.R."/>
            <person name="Brown A."/>
            <person name="Gordiyenko Y."/>
            <person name="Ramakrishnan V."/>
        </authorList>
    </citation>
    <scope>STRUCTURE BY ELECTRON MICROSCOPY (2.97 ANGSTROMS) OF 70S RIBOSOME IN COMPLEX WITH ARFA AND RF2</scope>
    <scope>SUBUNIT</scope>
</reference>
<reference key="18">
    <citation type="journal article" date="2017" name="Nature">
        <title>Structural basis of co-translational quality control by ArfA and RF2 bound to ribosome.</title>
        <authorList>
            <person name="Zeng F."/>
            <person name="Chen Y."/>
            <person name="Remis J."/>
            <person name="Shekhar M."/>
            <person name="Phillips J.C."/>
            <person name="Tajkhorshid E."/>
            <person name="Jin H."/>
        </authorList>
    </citation>
    <scope>STRUCTURE BY ELECTRON MICROSCOPY (3.52 ANGSTROMS) OF 70S RIBOSOME IN COMPLEX WITH ARFA AND RF2</scope>
    <scope>SUBUNIT</scope>
</reference>
<feature type="chain" id="PRO_0000167184" description="Small ribosomal subunit protein bS16">
    <location>
        <begin position="1"/>
        <end position="82"/>
    </location>
</feature>
<feature type="strand" evidence="17">
    <location>
        <begin position="2"/>
        <end position="11"/>
    </location>
</feature>
<feature type="strand" evidence="17">
    <location>
        <begin position="14"/>
        <end position="23"/>
    </location>
</feature>
<feature type="strand" evidence="14">
    <location>
        <begin position="24"/>
        <end position="26"/>
    </location>
</feature>
<feature type="strand" evidence="18">
    <location>
        <begin position="28"/>
        <end position="30"/>
    </location>
</feature>
<feature type="strand" evidence="17">
    <location>
        <begin position="33"/>
        <end position="39"/>
    </location>
</feature>
<feature type="strand" evidence="16">
    <location>
        <begin position="45"/>
        <end position="47"/>
    </location>
</feature>
<feature type="strand" evidence="17">
    <location>
        <begin position="50"/>
        <end position="52"/>
    </location>
</feature>
<feature type="helix" evidence="17">
    <location>
        <begin position="54"/>
        <end position="62"/>
    </location>
</feature>
<feature type="strand" evidence="15">
    <location>
        <begin position="64"/>
        <end position="67"/>
    </location>
</feature>
<feature type="helix" evidence="17">
    <location>
        <begin position="69"/>
        <end position="78"/>
    </location>
</feature>
<dbReference type="EMBL" id="X01818">
    <property type="protein sequence ID" value="CAA25958.1"/>
    <property type="molecule type" value="Genomic_DNA"/>
</dbReference>
<dbReference type="EMBL" id="U00096">
    <property type="protein sequence ID" value="AAC75658.1"/>
    <property type="molecule type" value="Genomic_DNA"/>
</dbReference>
<dbReference type="EMBL" id="AP009048">
    <property type="protein sequence ID" value="BAA16494.2"/>
    <property type="molecule type" value="Genomic_DNA"/>
</dbReference>
<dbReference type="PIR" id="S07948">
    <property type="entry name" value="R3EC16"/>
</dbReference>
<dbReference type="RefSeq" id="NP_417100.1">
    <property type="nucleotide sequence ID" value="NC_000913.3"/>
</dbReference>
<dbReference type="RefSeq" id="WP_000256450.1">
    <property type="nucleotide sequence ID" value="NZ_STEB01000040.1"/>
</dbReference>
<dbReference type="PDB" id="1ML5">
    <property type="method" value="EM"/>
    <property type="resolution" value="14.00 A"/>
    <property type="chains" value="S=1-82"/>
</dbReference>
<dbReference type="PDB" id="2YKR">
    <property type="method" value="EM"/>
    <property type="resolution" value="9.80 A"/>
    <property type="chains" value="P=1-82"/>
</dbReference>
<dbReference type="PDB" id="3IY8">
    <property type="method" value="EM"/>
    <property type="resolution" value="14.10 A"/>
    <property type="chains" value="P=1-82"/>
</dbReference>
<dbReference type="PDB" id="3J9Y">
    <property type="method" value="EM"/>
    <property type="resolution" value="3.90 A"/>
    <property type="chains" value="p=1-82"/>
</dbReference>
<dbReference type="PDB" id="3J9Z">
    <property type="method" value="EM"/>
    <property type="resolution" value="3.60 A"/>
    <property type="chains" value="SP=1-82"/>
</dbReference>
<dbReference type="PDB" id="3JA1">
    <property type="method" value="EM"/>
    <property type="resolution" value="3.60 A"/>
    <property type="chains" value="SP=1-82"/>
</dbReference>
<dbReference type="PDB" id="3JBU">
    <property type="method" value="EM"/>
    <property type="resolution" value="3.64 A"/>
    <property type="chains" value="P=1-82"/>
</dbReference>
<dbReference type="PDB" id="3JBV">
    <property type="method" value="EM"/>
    <property type="resolution" value="3.32 A"/>
    <property type="chains" value="P=1-82"/>
</dbReference>
<dbReference type="PDB" id="3JCD">
    <property type="method" value="EM"/>
    <property type="resolution" value="3.70 A"/>
    <property type="chains" value="p=1-82"/>
</dbReference>
<dbReference type="PDB" id="3JCE">
    <property type="method" value="EM"/>
    <property type="resolution" value="3.20 A"/>
    <property type="chains" value="p=1-82"/>
</dbReference>
<dbReference type="PDB" id="3JCJ">
    <property type="method" value="EM"/>
    <property type="resolution" value="3.70 A"/>
    <property type="chains" value="y=1-82"/>
</dbReference>
<dbReference type="PDB" id="3JCN">
    <property type="method" value="EM"/>
    <property type="resolution" value="4.60 A"/>
    <property type="chains" value="s=1-82"/>
</dbReference>
<dbReference type="PDB" id="4A2I">
    <property type="method" value="EM"/>
    <property type="resolution" value="16.50 A"/>
    <property type="chains" value="P=1-82"/>
</dbReference>
<dbReference type="PDB" id="4ADV">
    <property type="method" value="EM"/>
    <property type="resolution" value="13.50 A"/>
    <property type="chains" value="P=1-82"/>
</dbReference>
<dbReference type="PDB" id="4U1U">
    <property type="method" value="X-ray"/>
    <property type="resolution" value="2.95 A"/>
    <property type="chains" value="AP/CP=1-82"/>
</dbReference>
<dbReference type="PDB" id="4U1V">
    <property type="method" value="X-ray"/>
    <property type="resolution" value="3.00 A"/>
    <property type="chains" value="AP/CP=1-82"/>
</dbReference>
<dbReference type="PDB" id="4U20">
    <property type="method" value="X-ray"/>
    <property type="resolution" value="2.90 A"/>
    <property type="chains" value="AP/CP=1-82"/>
</dbReference>
<dbReference type="PDB" id="4U24">
    <property type="method" value="X-ray"/>
    <property type="resolution" value="2.90 A"/>
    <property type="chains" value="AP/CP=1-82"/>
</dbReference>
<dbReference type="PDB" id="4U25">
    <property type="method" value="X-ray"/>
    <property type="resolution" value="2.90 A"/>
    <property type="chains" value="AP/CP=1-82"/>
</dbReference>
<dbReference type="PDB" id="4U26">
    <property type="method" value="X-ray"/>
    <property type="resolution" value="2.80 A"/>
    <property type="chains" value="AP/CP=1-82"/>
</dbReference>
<dbReference type="PDB" id="4U27">
    <property type="method" value="X-ray"/>
    <property type="resolution" value="2.80 A"/>
    <property type="chains" value="AP/CP=1-82"/>
</dbReference>
<dbReference type="PDB" id="4V47">
    <property type="method" value="EM"/>
    <property type="resolution" value="12.30 A"/>
    <property type="chains" value="BP=1-82"/>
</dbReference>
<dbReference type="PDB" id="4V48">
    <property type="method" value="EM"/>
    <property type="resolution" value="11.50 A"/>
    <property type="chains" value="BP=1-82"/>
</dbReference>
<dbReference type="PDB" id="4V4H">
    <property type="method" value="X-ray"/>
    <property type="resolution" value="3.46 A"/>
    <property type="chains" value="AP/CP=1-82"/>
</dbReference>
<dbReference type="PDB" id="4V4Q">
    <property type="method" value="X-ray"/>
    <property type="resolution" value="3.46 A"/>
    <property type="chains" value="AP/CP=1-82"/>
</dbReference>
<dbReference type="PDB" id="4V4V">
    <property type="method" value="EM"/>
    <property type="resolution" value="15.00 A"/>
    <property type="chains" value="AP=1-78"/>
</dbReference>
<dbReference type="PDB" id="4V4W">
    <property type="method" value="EM"/>
    <property type="resolution" value="15.00 A"/>
    <property type="chains" value="AP=1-78"/>
</dbReference>
<dbReference type="PDB" id="4V50">
    <property type="method" value="X-ray"/>
    <property type="resolution" value="3.22 A"/>
    <property type="chains" value="AP/CP=1-82"/>
</dbReference>
<dbReference type="PDB" id="4V52">
    <property type="method" value="X-ray"/>
    <property type="resolution" value="3.21 A"/>
    <property type="chains" value="AP/CP=1-82"/>
</dbReference>
<dbReference type="PDB" id="4V53">
    <property type="method" value="X-ray"/>
    <property type="resolution" value="3.54 A"/>
    <property type="chains" value="AP/CP=1-82"/>
</dbReference>
<dbReference type="PDB" id="4V54">
    <property type="method" value="X-ray"/>
    <property type="resolution" value="3.30 A"/>
    <property type="chains" value="AP/CP=1-82"/>
</dbReference>
<dbReference type="PDB" id="4V55">
    <property type="method" value="X-ray"/>
    <property type="resolution" value="4.00 A"/>
    <property type="chains" value="AP/CP=1-82"/>
</dbReference>
<dbReference type="PDB" id="4V56">
    <property type="method" value="X-ray"/>
    <property type="resolution" value="3.93 A"/>
    <property type="chains" value="AP/CP=1-82"/>
</dbReference>
<dbReference type="PDB" id="4V57">
    <property type="method" value="X-ray"/>
    <property type="resolution" value="3.50 A"/>
    <property type="chains" value="AP/CP=1-82"/>
</dbReference>
<dbReference type="PDB" id="4V5B">
    <property type="method" value="X-ray"/>
    <property type="resolution" value="3.74 A"/>
    <property type="chains" value="BP/DP=1-82"/>
</dbReference>
<dbReference type="PDB" id="4V5H">
    <property type="method" value="EM"/>
    <property type="resolution" value="5.80 A"/>
    <property type="chains" value="AP=1-80"/>
</dbReference>
<dbReference type="PDB" id="4V5Y">
    <property type="method" value="X-ray"/>
    <property type="resolution" value="4.45 A"/>
    <property type="chains" value="AP/CP=1-82"/>
</dbReference>
<dbReference type="PDB" id="4V64">
    <property type="method" value="X-ray"/>
    <property type="resolution" value="3.50 A"/>
    <property type="chains" value="AP/CP=1-82"/>
</dbReference>
<dbReference type="PDB" id="4V65">
    <property type="method" value="EM"/>
    <property type="resolution" value="9.00 A"/>
    <property type="chains" value="AI=1-82"/>
</dbReference>
<dbReference type="PDB" id="4V66">
    <property type="method" value="EM"/>
    <property type="resolution" value="9.00 A"/>
    <property type="chains" value="AI=1-82"/>
</dbReference>
<dbReference type="PDB" id="4V69">
    <property type="method" value="EM"/>
    <property type="resolution" value="6.70 A"/>
    <property type="chains" value="AP=1-80"/>
</dbReference>
<dbReference type="PDB" id="4V6C">
    <property type="method" value="X-ray"/>
    <property type="resolution" value="3.19 A"/>
    <property type="chains" value="AP/CP=1-82"/>
</dbReference>
<dbReference type="PDB" id="4V6D">
    <property type="method" value="X-ray"/>
    <property type="resolution" value="3.81 A"/>
    <property type="chains" value="AP/CP=1-82"/>
</dbReference>
<dbReference type="PDB" id="4V6E">
    <property type="method" value="X-ray"/>
    <property type="resolution" value="3.71 A"/>
    <property type="chains" value="AP/CP=1-82"/>
</dbReference>
<dbReference type="PDB" id="4V6K">
    <property type="method" value="EM"/>
    <property type="resolution" value="8.25 A"/>
    <property type="chains" value="BT=1-82"/>
</dbReference>
<dbReference type="PDB" id="4V6L">
    <property type="method" value="EM"/>
    <property type="resolution" value="13.20 A"/>
    <property type="chains" value="AT=1-82"/>
</dbReference>
<dbReference type="PDB" id="4V6M">
    <property type="method" value="EM"/>
    <property type="resolution" value="7.10 A"/>
    <property type="chains" value="AP=1-82"/>
</dbReference>
<dbReference type="PDB" id="4V6N">
    <property type="method" value="EM"/>
    <property type="resolution" value="12.10 A"/>
    <property type="chains" value="BS=1-82"/>
</dbReference>
<dbReference type="PDB" id="4V6O">
    <property type="method" value="EM"/>
    <property type="resolution" value="14.70 A"/>
    <property type="chains" value="AS=1-82"/>
</dbReference>
<dbReference type="PDB" id="4V6P">
    <property type="method" value="EM"/>
    <property type="resolution" value="13.50 A"/>
    <property type="chains" value="AS=1-82"/>
</dbReference>
<dbReference type="PDB" id="4V6Q">
    <property type="method" value="EM"/>
    <property type="resolution" value="11.50 A"/>
    <property type="chains" value="AS=1-82"/>
</dbReference>
<dbReference type="PDB" id="4V6R">
    <property type="method" value="EM"/>
    <property type="resolution" value="11.50 A"/>
    <property type="chains" value="AS=1-82"/>
</dbReference>
<dbReference type="PDB" id="4V6S">
    <property type="method" value="EM"/>
    <property type="resolution" value="13.10 A"/>
    <property type="chains" value="BR=1-82"/>
</dbReference>
<dbReference type="PDB" id="4V6T">
    <property type="method" value="EM"/>
    <property type="resolution" value="8.30 A"/>
    <property type="chains" value="AP=1-82"/>
</dbReference>
<dbReference type="PDB" id="4V6V">
    <property type="method" value="EM"/>
    <property type="resolution" value="9.80 A"/>
    <property type="chains" value="AP=1-82"/>
</dbReference>
<dbReference type="PDB" id="4V6Y">
    <property type="method" value="EM"/>
    <property type="resolution" value="12.00 A"/>
    <property type="chains" value="AP=1-80"/>
</dbReference>
<dbReference type="PDB" id="4V6Z">
    <property type="method" value="EM"/>
    <property type="resolution" value="12.00 A"/>
    <property type="chains" value="AP=1-80"/>
</dbReference>
<dbReference type="PDB" id="4V70">
    <property type="method" value="EM"/>
    <property type="resolution" value="17.00 A"/>
    <property type="chains" value="AP=1-80"/>
</dbReference>
<dbReference type="PDB" id="4V71">
    <property type="method" value="EM"/>
    <property type="resolution" value="20.00 A"/>
    <property type="chains" value="AP=1-80"/>
</dbReference>
<dbReference type="PDB" id="4V72">
    <property type="method" value="EM"/>
    <property type="resolution" value="13.00 A"/>
    <property type="chains" value="AP=1-80"/>
</dbReference>
<dbReference type="PDB" id="4V73">
    <property type="method" value="EM"/>
    <property type="resolution" value="15.00 A"/>
    <property type="chains" value="AP=1-80"/>
</dbReference>
<dbReference type="PDB" id="4V74">
    <property type="method" value="EM"/>
    <property type="resolution" value="17.00 A"/>
    <property type="chains" value="AP=1-80"/>
</dbReference>
<dbReference type="PDB" id="4V75">
    <property type="method" value="EM"/>
    <property type="resolution" value="12.00 A"/>
    <property type="chains" value="AP=1-80"/>
</dbReference>
<dbReference type="PDB" id="4V76">
    <property type="method" value="EM"/>
    <property type="resolution" value="17.00 A"/>
    <property type="chains" value="AP=1-80"/>
</dbReference>
<dbReference type="PDB" id="4V77">
    <property type="method" value="EM"/>
    <property type="resolution" value="17.00 A"/>
    <property type="chains" value="AP=1-80"/>
</dbReference>
<dbReference type="PDB" id="4V78">
    <property type="method" value="EM"/>
    <property type="resolution" value="20.00 A"/>
    <property type="chains" value="AP=1-80"/>
</dbReference>
<dbReference type="PDB" id="4V79">
    <property type="method" value="EM"/>
    <property type="resolution" value="15.00 A"/>
    <property type="chains" value="AP=1-80"/>
</dbReference>
<dbReference type="PDB" id="4V7A">
    <property type="method" value="EM"/>
    <property type="resolution" value="9.00 A"/>
    <property type="chains" value="AP=1-80"/>
</dbReference>
<dbReference type="PDB" id="4V7B">
    <property type="method" value="EM"/>
    <property type="resolution" value="6.80 A"/>
    <property type="chains" value="AP=1-82"/>
</dbReference>
<dbReference type="PDB" id="4V7C">
    <property type="method" value="EM"/>
    <property type="resolution" value="7.60 A"/>
    <property type="chains" value="AP=1-82"/>
</dbReference>
<dbReference type="PDB" id="4V7D">
    <property type="method" value="EM"/>
    <property type="resolution" value="7.60 A"/>
    <property type="chains" value="BP=1-82"/>
</dbReference>
<dbReference type="PDB" id="4V7I">
    <property type="method" value="EM"/>
    <property type="resolution" value="9.60 A"/>
    <property type="chains" value="BP=1-82"/>
</dbReference>
<dbReference type="PDB" id="4V7S">
    <property type="method" value="X-ray"/>
    <property type="resolution" value="3.25 A"/>
    <property type="chains" value="AP=1-82, CP=1-80"/>
</dbReference>
<dbReference type="PDB" id="4V7T">
    <property type="method" value="X-ray"/>
    <property type="resolution" value="3.19 A"/>
    <property type="chains" value="AP=1-82, CP=1-80"/>
</dbReference>
<dbReference type="PDB" id="4V7U">
    <property type="method" value="X-ray"/>
    <property type="resolution" value="3.10 A"/>
    <property type="chains" value="AP/CP=1-82"/>
</dbReference>
<dbReference type="PDB" id="4V7V">
    <property type="method" value="X-ray"/>
    <property type="resolution" value="3.29 A"/>
    <property type="chains" value="AP=1-82, CP=1-80"/>
</dbReference>
<dbReference type="PDB" id="4V85">
    <property type="method" value="X-ray"/>
    <property type="resolution" value="3.20 A"/>
    <property type="chains" value="AP=1-82"/>
</dbReference>
<dbReference type="PDB" id="4V89">
    <property type="method" value="X-ray"/>
    <property type="resolution" value="3.70 A"/>
    <property type="chains" value="AP=1-82"/>
</dbReference>
<dbReference type="PDB" id="4V9C">
    <property type="method" value="X-ray"/>
    <property type="resolution" value="3.30 A"/>
    <property type="chains" value="AP/CP=1-82"/>
</dbReference>
<dbReference type="PDB" id="4V9D">
    <property type="method" value="X-ray"/>
    <property type="resolution" value="3.00 A"/>
    <property type="chains" value="AP/BP=1-82"/>
</dbReference>
<dbReference type="PDB" id="4V9O">
    <property type="method" value="X-ray"/>
    <property type="resolution" value="2.90 A"/>
    <property type="chains" value="BP/DP/FP/HP=1-82"/>
</dbReference>
<dbReference type="PDB" id="4V9P">
    <property type="method" value="X-ray"/>
    <property type="resolution" value="2.90 A"/>
    <property type="chains" value="BP/DP/FP/HP=1-82"/>
</dbReference>
<dbReference type="PDB" id="4WF1">
    <property type="method" value="X-ray"/>
    <property type="resolution" value="3.09 A"/>
    <property type="chains" value="AP/CP=1-82"/>
</dbReference>
<dbReference type="PDB" id="4WOI">
    <property type="method" value="X-ray"/>
    <property type="resolution" value="3.00 A"/>
    <property type="chains" value="AP/DP=1-82"/>
</dbReference>
<dbReference type="PDB" id="4WWW">
    <property type="method" value="X-ray"/>
    <property type="resolution" value="3.10 A"/>
    <property type="chains" value="QP/XP=1-82"/>
</dbReference>
<dbReference type="PDB" id="4YBB">
    <property type="method" value="X-ray"/>
    <property type="resolution" value="2.10 A"/>
    <property type="chains" value="AP/BP=1-82"/>
</dbReference>
<dbReference type="PDB" id="5AFI">
    <property type="method" value="EM"/>
    <property type="resolution" value="2.90 A"/>
    <property type="chains" value="p=1-82"/>
</dbReference>
<dbReference type="PDB" id="5H5U">
    <property type="method" value="EM"/>
    <property type="resolution" value="3.00 A"/>
    <property type="chains" value="w=1-82"/>
</dbReference>
<dbReference type="PDB" id="5IQR">
    <property type="method" value="EM"/>
    <property type="resolution" value="3.00 A"/>
    <property type="chains" value="u=1-82"/>
</dbReference>
<dbReference type="PDB" id="5IT8">
    <property type="method" value="X-ray"/>
    <property type="resolution" value="3.12 A"/>
    <property type="chains" value="AP/BP=1-82"/>
</dbReference>
<dbReference type="PDB" id="5J5B">
    <property type="method" value="X-ray"/>
    <property type="resolution" value="2.80 A"/>
    <property type="chains" value="AP/BP=1-82"/>
</dbReference>
<dbReference type="PDB" id="5J7L">
    <property type="method" value="X-ray"/>
    <property type="resolution" value="3.00 A"/>
    <property type="chains" value="AP/BP=1-82"/>
</dbReference>
<dbReference type="PDB" id="5J88">
    <property type="method" value="X-ray"/>
    <property type="resolution" value="3.32 A"/>
    <property type="chains" value="AP/BP=1-82"/>
</dbReference>
<dbReference type="PDB" id="5J8A">
    <property type="method" value="X-ray"/>
    <property type="resolution" value="3.10 A"/>
    <property type="chains" value="AP/BP=1-82"/>
</dbReference>
<dbReference type="PDB" id="5J91">
    <property type="method" value="X-ray"/>
    <property type="resolution" value="2.96 A"/>
    <property type="chains" value="AP/BP=1-82"/>
</dbReference>
<dbReference type="PDB" id="5JC9">
    <property type="method" value="X-ray"/>
    <property type="resolution" value="3.03 A"/>
    <property type="chains" value="AP/BP=1-82"/>
</dbReference>
<dbReference type="PDB" id="5JTE">
    <property type="method" value="EM"/>
    <property type="resolution" value="3.60 A"/>
    <property type="chains" value="AP=1-82"/>
</dbReference>
<dbReference type="PDB" id="5JU8">
    <property type="method" value="EM"/>
    <property type="resolution" value="3.60 A"/>
    <property type="chains" value="AP=1-82"/>
</dbReference>
<dbReference type="PDB" id="5KCR">
    <property type="method" value="EM"/>
    <property type="resolution" value="3.60 A"/>
    <property type="chains" value="1p=1-82"/>
</dbReference>
<dbReference type="PDB" id="5KCS">
    <property type="method" value="EM"/>
    <property type="resolution" value="3.90 A"/>
    <property type="chains" value="1p=1-82"/>
</dbReference>
<dbReference type="PDB" id="5KPS">
    <property type="method" value="EM"/>
    <property type="resolution" value="3.90 A"/>
    <property type="chains" value="21=1-82"/>
</dbReference>
<dbReference type="PDB" id="5KPV">
    <property type="method" value="EM"/>
    <property type="resolution" value="4.10 A"/>
    <property type="chains" value="20=1-82"/>
</dbReference>
<dbReference type="PDB" id="5KPW">
    <property type="method" value="EM"/>
    <property type="resolution" value="3.90 A"/>
    <property type="chains" value="20=1-82"/>
</dbReference>
<dbReference type="PDB" id="5KPX">
    <property type="method" value="EM"/>
    <property type="resolution" value="3.90 A"/>
    <property type="chains" value="20=1-82"/>
</dbReference>
<dbReference type="PDB" id="5L3P">
    <property type="method" value="EM"/>
    <property type="resolution" value="3.70 A"/>
    <property type="chains" value="p=1-82"/>
</dbReference>
<dbReference type="PDB" id="5LZA">
    <property type="method" value="EM"/>
    <property type="resolution" value="3.60 A"/>
    <property type="chains" value="p=1-82"/>
</dbReference>
<dbReference type="PDB" id="5LZB">
    <property type="method" value="EM"/>
    <property type="resolution" value="5.30 A"/>
    <property type="chains" value="p=1-82"/>
</dbReference>
<dbReference type="PDB" id="5LZC">
    <property type="method" value="EM"/>
    <property type="resolution" value="4.80 A"/>
    <property type="chains" value="p=1-82"/>
</dbReference>
<dbReference type="PDB" id="5LZD">
    <property type="method" value="EM"/>
    <property type="resolution" value="3.40 A"/>
    <property type="chains" value="p=1-82"/>
</dbReference>
<dbReference type="PDB" id="5LZE">
    <property type="method" value="EM"/>
    <property type="resolution" value="3.50 A"/>
    <property type="chains" value="p=1-82"/>
</dbReference>
<dbReference type="PDB" id="5LZF">
    <property type="method" value="EM"/>
    <property type="resolution" value="4.60 A"/>
    <property type="chains" value="p=1-82"/>
</dbReference>
<dbReference type="PDB" id="5MDV">
    <property type="method" value="EM"/>
    <property type="resolution" value="2.97 A"/>
    <property type="chains" value="u=1-82"/>
</dbReference>
<dbReference type="PDB" id="5MDW">
    <property type="method" value="EM"/>
    <property type="resolution" value="3.06 A"/>
    <property type="chains" value="u=1-82"/>
</dbReference>
<dbReference type="PDB" id="5MDY">
    <property type="method" value="EM"/>
    <property type="resolution" value="3.35 A"/>
    <property type="chains" value="u=1-82"/>
</dbReference>
<dbReference type="PDB" id="5MDZ">
    <property type="method" value="EM"/>
    <property type="resolution" value="3.10 A"/>
    <property type="chains" value="u=1-82"/>
</dbReference>
<dbReference type="PDB" id="5MGP">
    <property type="method" value="EM"/>
    <property type="resolution" value="3.10 A"/>
    <property type="chains" value="p=1-82"/>
</dbReference>
<dbReference type="PDB" id="5MY1">
    <property type="method" value="EM"/>
    <property type="resolution" value="7.60 A"/>
    <property type="chains" value="P=1-82"/>
</dbReference>
<dbReference type="PDB" id="5NO2">
    <property type="method" value="EM"/>
    <property type="resolution" value="5.16 A"/>
    <property type="chains" value="P=1-82"/>
</dbReference>
<dbReference type="PDB" id="5NO3">
    <property type="method" value="EM"/>
    <property type="resolution" value="5.16 A"/>
    <property type="chains" value="P=1-82"/>
</dbReference>
<dbReference type="PDB" id="5NO4">
    <property type="method" value="EM"/>
    <property type="resolution" value="5.16 A"/>
    <property type="chains" value="P=1-82"/>
</dbReference>
<dbReference type="PDB" id="5NP6">
    <property type="method" value="EM"/>
    <property type="resolution" value="3.60 A"/>
    <property type="chains" value="S=1-82"/>
</dbReference>
<dbReference type="PDB" id="5NWY">
    <property type="method" value="EM"/>
    <property type="resolution" value="2.93 A"/>
    <property type="chains" value="F=1-82"/>
</dbReference>
<dbReference type="PDB" id="5O2R">
    <property type="method" value="EM"/>
    <property type="resolution" value="3.40 A"/>
    <property type="chains" value="p=1-82"/>
</dbReference>
<dbReference type="PDB" id="5U4I">
    <property type="method" value="EM"/>
    <property type="resolution" value="3.50 A"/>
    <property type="chains" value="p=1-82"/>
</dbReference>
<dbReference type="PDB" id="5U9F">
    <property type="method" value="EM"/>
    <property type="resolution" value="3.20 A"/>
    <property type="chains" value="P=1-82"/>
</dbReference>
<dbReference type="PDB" id="5U9G">
    <property type="method" value="EM"/>
    <property type="resolution" value="3.20 A"/>
    <property type="chains" value="P=1-82"/>
</dbReference>
<dbReference type="PDB" id="5UYK">
    <property type="method" value="EM"/>
    <property type="resolution" value="3.90 A"/>
    <property type="chains" value="P=1-82"/>
</dbReference>
<dbReference type="PDB" id="5UYL">
    <property type="method" value="EM"/>
    <property type="resolution" value="3.60 A"/>
    <property type="chains" value="P=1-82"/>
</dbReference>
<dbReference type="PDB" id="5UYM">
    <property type="method" value="EM"/>
    <property type="resolution" value="3.20 A"/>
    <property type="chains" value="P=1-82"/>
</dbReference>
<dbReference type="PDB" id="5UYN">
    <property type="method" value="EM"/>
    <property type="resolution" value="4.00 A"/>
    <property type="chains" value="P=1-82"/>
</dbReference>
<dbReference type="PDB" id="5UYP">
    <property type="method" value="EM"/>
    <property type="resolution" value="3.90 A"/>
    <property type="chains" value="P=1-82"/>
</dbReference>
<dbReference type="PDB" id="5UYQ">
    <property type="method" value="EM"/>
    <property type="resolution" value="3.80 A"/>
    <property type="chains" value="P=1-82"/>
</dbReference>
<dbReference type="PDB" id="5UZ4">
    <property type="method" value="EM"/>
    <property type="resolution" value="5.80 A"/>
    <property type="chains" value="P=1-82"/>
</dbReference>
<dbReference type="PDB" id="5WDT">
    <property type="method" value="EM"/>
    <property type="resolution" value="3.00 A"/>
    <property type="chains" value="p=1-82"/>
</dbReference>
<dbReference type="PDB" id="5WE4">
    <property type="method" value="EM"/>
    <property type="resolution" value="3.10 A"/>
    <property type="chains" value="p=1-82"/>
</dbReference>
<dbReference type="PDB" id="5WE6">
    <property type="method" value="EM"/>
    <property type="resolution" value="3.40 A"/>
    <property type="chains" value="p=1-82"/>
</dbReference>
<dbReference type="PDB" id="5WF0">
    <property type="method" value="EM"/>
    <property type="resolution" value="3.60 A"/>
    <property type="chains" value="p=1-82"/>
</dbReference>
<dbReference type="PDB" id="5WFK">
    <property type="method" value="EM"/>
    <property type="resolution" value="3.40 A"/>
    <property type="chains" value="p=1-82"/>
</dbReference>
<dbReference type="PDB" id="5WFS">
    <property type="method" value="EM"/>
    <property type="resolution" value="3.00 A"/>
    <property type="chains" value="p=1-82"/>
</dbReference>
<dbReference type="PDB" id="6AWB">
    <property type="method" value="EM"/>
    <property type="resolution" value="6.70 A"/>
    <property type="chains" value="S=1-82"/>
</dbReference>
<dbReference type="PDB" id="6AWC">
    <property type="method" value="EM"/>
    <property type="resolution" value="7.90 A"/>
    <property type="chains" value="S=1-82"/>
</dbReference>
<dbReference type="PDB" id="6AWD">
    <property type="method" value="EM"/>
    <property type="resolution" value="8.10 A"/>
    <property type="chains" value="S=1-82"/>
</dbReference>
<dbReference type="PDB" id="6BU8">
    <property type="method" value="EM"/>
    <property type="resolution" value="3.50 A"/>
    <property type="chains" value="P=1-82"/>
</dbReference>
<dbReference type="PDB" id="6BY1">
    <property type="method" value="X-ray"/>
    <property type="resolution" value="3.94 A"/>
    <property type="chains" value="AP/BP=1-82"/>
</dbReference>
<dbReference type="PDB" id="6C4I">
    <property type="method" value="EM"/>
    <property type="resolution" value="3.24 A"/>
    <property type="chains" value="p=1-82"/>
</dbReference>
<dbReference type="PDB" id="6DNC">
    <property type="method" value="EM"/>
    <property type="resolution" value="3.70 A"/>
    <property type="chains" value="CB=1-82"/>
</dbReference>
<dbReference type="PDB" id="6ENF">
    <property type="method" value="EM"/>
    <property type="resolution" value="3.20 A"/>
    <property type="chains" value="p=1-82"/>
</dbReference>
<dbReference type="PDB" id="6ENJ">
    <property type="method" value="EM"/>
    <property type="resolution" value="3.70 A"/>
    <property type="chains" value="p=1-82"/>
</dbReference>
<dbReference type="PDB" id="6ENU">
    <property type="method" value="EM"/>
    <property type="resolution" value="3.10 A"/>
    <property type="chains" value="p=1-82"/>
</dbReference>
<dbReference type="PDB" id="6GWT">
    <property type="method" value="EM"/>
    <property type="resolution" value="3.80 A"/>
    <property type="chains" value="p=1-82"/>
</dbReference>
<dbReference type="PDB" id="6GXM">
    <property type="method" value="EM"/>
    <property type="resolution" value="3.80 A"/>
    <property type="chains" value="p=1-82"/>
</dbReference>
<dbReference type="PDB" id="6GXN">
    <property type="method" value="EM"/>
    <property type="resolution" value="3.90 A"/>
    <property type="chains" value="p=1-82"/>
</dbReference>
<dbReference type="PDB" id="6GXO">
    <property type="method" value="EM"/>
    <property type="resolution" value="3.90 A"/>
    <property type="chains" value="p=1-82"/>
</dbReference>
<dbReference type="PDB" id="6GXP">
    <property type="method" value="EM"/>
    <property type="resolution" value="4.40 A"/>
    <property type="chains" value="p=1-82"/>
</dbReference>
<dbReference type="PDB" id="6H4N">
    <property type="method" value="EM"/>
    <property type="resolution" value="3.00 A"/>
    <property type="chains" value="p=1-82"/>
</dbReference>
<dbReference type="PDB" id="6H58">
    <property type="method" value="EM"/>
    <property type="resolution" value="7.90 A"/>
    <property type="chains" value="p/pp=1-82"/>
</dbReference>
<dbReference type="PDB" id="6HRM">
    <property type="method" value="EM"/>
    <property type="resolution" value="2.96 A"/>
    <property type="chains" value="u=1-82"/>
</dbReference>
<dbReference type="PDB" id="6I7V">
    <property type="method" value="X-ray"/>
    <property type="resolution" value="2.90 A"/>
    <property type="chains" value="AP/BP=1-82"/>
</dbReference>
<dbReference type="PDB" id="6NQB">
    <property type="method" value="EM"/>
    <property type="resolution" value="3.80 A"/>
    <property type="chains" value="P=1-79"/>
</dbReference>
<dbReference type="PDB" id="6O7K">
    <property type="method" value="EM"/>
    <property type="resolution" value="4.20 A"/>
    <property type="chains" value="y=1-82"/>
</dbReference>
<dbReference type="PDB" id="6O9J">
    <property type="method" value="EM"/>
    <property type="resolution" value="3.90 A"/>
    <property type="chains" value="p=1-82"/>
</dbReference>
<dbReference type="PDB" id="6O9K">
    <property type="method" value="EM"/>
    <property type="resolution" value="4.00 A"/>
    <property type="chains" value="p=1-82"/>
</dbReference>
<dbReference type="PDB" id="6OFX">
    <property type="method" value="EM"/>
    <property type="resolution" value="3.30 A"/>
    <property type="chains" value="U=1-82"/>
</dbReference>
<dbReference type="PDB" id="6OG7">
    <property type="method" value="EM"/>
    <property type="resolution" value="3.30 A"/>
    <property type="chains" value="U=1-82"/>
</dbReference>
<dbReference type="PDB" id="6OGF">
    <property type="method" value="EM"/>
    <property type="resolution" value="3.90 A"/>
    <property type="chains" value="U=1-82"/>
</dbReference>
<dbReference type="PDB" id="6OGG">
    <property type="method" value="EM"/>
    <property type="resolution" value="4.20 A"/>
    <property type="chains" value="U=1-82"/>
</dbReference>
<dbReference type="PDB" id="6OGI">
    <property type="method" value="EM"/>
    <property type="resolution" value="3.40 A"/>
    <property type="chains" value="U=1-82"/>
</dbReference>
<dbReference type="PDB" id="6OM6">
    <property type="method" value="EM"/>
    <property type="resolution" value="3.10 A"/>
    <property type="chains" value="u=1-82"/>
</dbReference>
<dbReference type="PDB" id="6ORE">
    <property type="method" value="EM"/>
    <property type="resolution" value="2.90 A"/>
    <property type="chains" value="u=1-82"/>
</dbReference>
<dbReference type="PDB" id="6ORL">
    <property type="method" value="EM"/>
    <property type="resolution" value="3.50 A"/>
    <property type="chains" value="u=1-82"/>
</dbReference>
<dbReference type="PDB" id="6OSK">
    <property type="method" value="EM"/>
    <property type="resolution" value="3.60 A"/>
    <property type="chains" value="u=1-82"/>
</dbReference>
<dbReference type="PDB" id="6OSQ">
    <property type="method" value="EM"/>
    <property type="resolution" value="3.50 A"/>
    <property type="chains" value="u=1-82"/>
</dbReference>
<dbReference type="PDB" id="6OST">
    <property type="method" value="EM"/>
    <property type="resolution" value="4.20 A"/>
    <property type="chains" value="u=1-82"/>
</dbReference>
<dbReference type="PDB" id="6OT3">
    <property type="method" value="EM"/>
    <property type="resolution" value="3.90 A"/>
    <property type="chains" value="u=1-82"/>
</dbReference>
<dbReference type="PDB" id="6OUO">
    <property type="method" value="EM"/>
    <property type="resolution" value="3.70 A"/>
    <property type="chains" value="u=1-82"/>
</dbReference>
<dbReference type="PDB" id="6Q98">
    <property type="method" value="EM"/>
    <property type="resolution" value="4.30 A"/>
    <property type="chains" value="u=1-82"/>
</dbReference>
<dbReference type="PDB" id="6Q9A">
    <property type="method" value="EM"/>
    <property type="resolution" value="3.70 A"/>
    <property type="chains" value="u=1-82"/>
</dbReference>
<dbReference type="PDB" id="6SZS">
    <property type="method" value="EM"/>
    <property type="resolution" value="3.06 A"/>
    <property type="chains" value="p=1-82"/>
</dbReference>
<dbReference type="PDB" id="6TBV">
    <property type="method" value="EM"/>
    <property type="resolution" value="2.70 A"/>
    <property type="chains" value="S161=1-82"/>
</dbReference>
<dbReference type="PDB" id="6TC3">
    <property type="method" value="EM"/>
    <property type="resolution" value="2.70 A"/>
    <property type="chains" value="S161=1-82"/>
</dbReference>
<dbReference type="PDB" id="6VU3">
    <property type="method" value="EM"/>
    <property type="resolution" value="3.70 A"/>
    <property type="chains" value="U=1-82"/>
</dbReference>
<dbReference type="PDB" id="6VWL">
    <property type="method" value="EM"/>
    <property type="resolution" value="3.10 A"/>
    <property type="chains" value="o=1-82"/>
</dbReference>
<dbReference type="PDB" id="6VWM">
    <property type="method" value="EM"/>
    <property type="resolution" value="3.40 A"/>
    <property type="chains" value="o=1-82"/>
</dbReference>
<dbReference type="PDB" id="6VWN">
    <property type="method" value="EM"/>
    <property type="resolution" value="3.40 A"/>
    <property type="chains" value="o=1-82"/>
</dbReference>
<dbReference type="PDB" id="6VYQ">
    <property type="method" value="EM"/>
    <property type="resolution" value="3.70 A"/>
    <property type="chains" value="U=1-82"/>
</dbReference>
<dbReference type="PDB" id="6VYR">
    <property type="method" value="EM"/>
    <property type="resolution" value="3.80 A"/>
    <property type="chains" value="U=1-82"/>
</dbReference>
<dbReference type="PDB" id="6VYS">
    <property type="method" value="EM"/>
    <property type="resolution" value="3.70 A"/>
    <property type="chains" value="U=1-82"/>
</dbReference>
<dbReference type="PDB" id="6VYT">
    <property type="method" value="EM"/>
    <property type="resolution" value="14.00 A"/>
    <property type="chains" value="U=1-82"/>
</dbReference>
<dbReference type="PDB" id="6VYU">
    <property type="method" value="EM"/>
    <property type="resolution" value="7.00 A"/>
    <property type="chains" value="U=1-82"/>
</dbReference>
<dbReference type="PDB" id="6VYW">
    <property type="method" value="EM"/>
    <property type="resolution" value="7.00 A"/>
    <property type="chains" value="U=1-82"/>
</dbReference>
<dbReference type="PDB" id="6VYX">
    <property type="method" value="EM"/>
    <property type="resolution" value="9.90 A"/>
    <property type="chains" value="U=1-82"/>
</dbReference>
<dbReference type="PDB" id="6VYY">
    <property type="method" value="EM"/>
    <property type="resolution" value="9.90 A"/>
    <property type="chains" value="U=1-82"/>
</dbReference>
<dbReference type="PDB" id="6VYZ">
    <property type="method" value="EM"/>
    <property type="resolution" value="9.90 A"/>
    <property type="chains" value="U=1-82"/>
</dbReference>
<dbReference type="PDB" id="6VZ2">
    <property type="method" value="EM"/>
    <property type="resolution" value="10.00 A"/>
    <property type="chains" value="U=1-82"/>
</dbReference>
<dbReference type="PDB" id="6VZ3">
    <property type="method" value="EM"/>
    <property type="resolution" value="8.90 A"/>
    <property type="chains" value="U=1-82"/>
</dbReference>
<dbReference type="PDB" id="6VZ5">
    <property type="method" value="EM"/>
    <property type="resolution" value="8.90 A"/>
    <property type="chains" value="U=1-82"/>
</dbReference>
<dbReference type="PDB" id="6VZ7">
    <property type="method" value="EM"/>
    <property type="resolution" value="7.00 A"/>
    <property type="chains" value="U=1-82"/>
</dbReference>
<dbReference type="PDB" id="6VZJ">
    <property type="method" value="EM"/>
    <property type="resolution" value="4.10 A"/>
    <property type="chains" value="U=1-82"/>
</dbReference>
<dbReference type="PDB" id="6W6K">
    <property type="method" value="EM"/>
    <property type="resolution" value="3.60 A"/>
    <property type="chains" value="P=1-82"/>
</dbReference>
<dbReference type="PDB" id="6W77">
    <property type="method" value="EM"/>
    <property type="resolution" value="3.60 A"/>
    <property type="chains" value="P=1-82"/>
</dbReference>
<dbReference type="PDB" id="6W7M">
    <property type="method" value="EM"/>
    <property type="resolution" value="3.80 A"/>
    <property type="chains" value="P=1-82"/>
</dbReference>
<dbReference type="PDB" id="6W7N">
    <property type="method" value="EM"/>
    <property type="resolution" value="3.40 A"/>
    <property type="chains" value="P=1-82"/>
</dbReference>
<dbReference type="PDB" id="6W7W">
    <property type="method" value="EM"/>
    <property type="resolution" value="3.90 A"/>
    <property type="chains" value="O=1-82"/>
</dbReference>
<dbReference type="PDB" id="6WD0">
    <property type="method" value="EM"/>
    <property type="resolution" value="3.00 A"/>
    <property type="chains" value="U=1-82"/>
</dbReference>
<dbReference type="PDB" id="6WD1">
    <property type="method" value="EM"/>
    <property type="resolution" value="3.30 A"/>
    <property type="chains" value="U=1-82"/>
</dbReference>
<dbReference type="PDB" id="6WD2">
    <property type="method" value="EM"/>
    <property type="resolution" value="3.60 A"/>
    <property type="chains" value="U=1-82"/>
</dbReference>
<dbReference type="PDB" id="6WD3">
    <property type="method" value="EM"/>
    <property type="resolution" value="3.60 A"/>
    <property type="chains" value="U=1-82"/>
</dbReference>
<dbReference type="PDB" id="6WD4">
    <property type="method" value="EM"/>
    <property type="resolution" value="3.70 A"/>
    <property type="chains" value="U=1-82"/>
</dbReference>
<dbReference type="PDB" id="6WD5">
    <property type="method" value="EM"/>
    <property type="resolution" value="3.60 A"/>
    <property type="chains" value="U=1-82"/>
</dbReference>
<dbReference type="PDB" id="6WD6">
    <property type="method" value="EM"/>
    <property type="resolution" value="3.70 A"/>
    <property type="chains" value="U=1-82"/>
</dbReference>
<dbReference type="PDB" id="6WD7">
    <property type="method" value="EM"/>
    <property type="resolution" value="3.90 A"/>
    <property type="chains" value="U=1-82"/>
</dbReference>
<dbReference type="PDB" id="6WD8">
    <property type="method" value="EM"/>
    <property type="resolution" value="3.70 A"/>
    <property type="chains" value="U=1-82"/>
</dbReference>
<dbReference type="PDB" id="6WD9">
    <property type="method" value="EM"/>
    <property type="resolution" value="3.70 A"/>
    <property type="chains" value="U=1-82"/>
</dbReference>
<dbReference type="PDB" id="6WDA">
    <property type="method" value="EM"/>
    <property type="resolution" value="3.80 A"/>
    <property type="chains" value="U=1-82"/>
</dbReference>
<dbReference type="PDB" id="6WDB">
    <property type="method" value="EM"/>
    <property type="resolution" value="4.00 A"/>
    <property type="chains" value="U=1-82"/>
</dbReference>
<dbReference type="PDB" id="6WDC">
    <property type="method" value="EM"/>
    <property type="resolution" value="4.20 A"/>
    <property type="chains" value="U=1-82"/>
</dbReference>
<dbReference type="PDB" id="6WDD">
    <property type="method" value="EM"/>
    <property type="resolution" value="3.20 A"/>
    <property type="chains" value="U=1-82"/>
</dbReference>
<dbReference type="PDB" id="6WDE">
    <property type="method" value="EM"/>
    <property type="resolution" value="3.00 A"/>
    <property type="chains" value="U=1-82"/>
</dbReference>
<dbReference type="PDB" id="6WDF">
    <property type="method" value="EM"/>
    <property type="resolution" value="3.30 A"/>
    <property type="chains" value="U=1-82"/>
</dbReference>
<dbReference type="PDB" id="6WDG">
    <property type="method" value="EM"/>
    <property type="resolution" value="3.30 A"/>
    <property type="chains" value="U=1-82"/>
</dbReference>
<dbReference type="PDB" id="6WDH">
    <property type="method" value="EM"/>
    <property type="resolution" value="4.30 A"/>
    <property type="chains" value="U=1-82"/>
</dbReference>
<dbReference type="PDB" id="6WDI">
    <property type="method" value="EM"/>
    <property type="resolution" value="4.00 A"/>
    <property type="chains" value="U=1-82"/>
</dbReference>
<dbReference type="PDB" id="6WDJ">
    <property type="method" value="EM"/>
    <property type="resolution" value="3.70 A"/>
    <property type="chains" value="U=1-82"/>
</dbReference>
<dbReference type="PDB" id="6WDK">
    <property type="method" value="EM"/>
    <property type="resolution" value="3.60 A"/>
    <property type="chains" value="U=1-82"/>
</dbReference>
<dbReference type="PDB" id="6WDL">
    <property type="method" value="EM"/>
    <property type="resolution" value="3.70 A"/>
    <property type="chains" value="U=1-82"/>
</dbReference>
<dbReference type="PDB" id="6WDM">
    <property type="method" value="EM"/>
    <property type="resolution" value="3.60 A"/>
    <property type="chains" value="U=1-82"/>
</dbReference>
<dbReference type="PDB" id="6WNV">
    <property type="method" value="EM"/>
    <property type="resolution" value="3.50 A"/>
    <property type="chains" value="U=1-82"/>
</dbReference>
<dbReference type="PDB" id="6WNW">
    <property type="method" value="EM"/>
    <property type="resolution" value="3.20 A"/>
    <property type="chains" value="U=1-82"/>
</dbReference>
<dbReference type="PDB" id="6X6T">
    <property type="method" value="EM"/>
    <property type="resolution" value="3.20 A"/>
    <property type="chains" value="U=1-82"/>
</dbReference>
<dbReference type="PDB" id="6X7F">
    <property type="method" value="EM"/>
    <property type="resolution" value="3.50 A"/>
    <property type="chains" value="U=1-82"/>
</dbReference>
<dbReference type="PDB" id="6X7K">
    <property type="method" value="EM"/>
    <property type="resolution" value="3.10 A"/>
    <property type="chains" value="U=1-82"/>
</dbReference>
<dbReference type="PDB" id="6X9Q">
    <property type="method" value="EM"/>
    <property type="resolution" value="4.80 A"/>
    <property type="chains" value="U=1-82"/>
</dbReference>
<dbReference type="PDB" id="6XDQ">
    <property type="method" value="EM"/>
    <property type="resolution" value="3.70 A"/>
    <property type="chains" value="U=1-82"/>
</dbReference>
<dbReference type="PDB" id="6XDR">
    <property type="method" value="EM"/>
    <property type="resolution" value="4.70 A"/>
    <property type="chains" value="U=1-82"/>
</dbReference>
<dbReference type="PDB" id="6XE0">
    <property type="method" value="EM"/>
    <property type="resolution" value="6.80 A"/>
    <property type="chains" value="P=1-82"/>
</dbReference>
<dbReference type="PDB" id="6XGF">
    <property type="method" value="EM"/>
    <property type="resolution" value="5.00 A"/>
    <property type="chains" value="U=1-82"/>
</dbReference>
<dbReference type="PDB" id="6XII">
    <property type="method" value="EM"/>
    <property type="resolution" value="7.00 A"/>
    <property type="chains" value="U=1-82"/>
</dbReference>
<dbReference type="PDB" id="6XIJ">
    <property type="method" value="EM"/>
    <property type="resolution" value="8.00 A"/>
    <property type="chains" value="U=1-82"/>
</dbReference>
<dbReference type="PDB" id="6XZA">
    <property type="method" value="EM"/>
    <property type="resolution" value="2.66 A"/>
    <property type="chains" value="P1=1-82"/>
</dbReference>
<dbReference type="PDB" id="6XZB">
    <property type="method" value="EM"/>
    <property type="resolution" value="2.54 A"/>
    <property type="chains" value="P1=1-82"/>
</dbReference>
<dbReference type="PDB" id="6Y69">
    <property type="method" value="EM"/>
    <property type="resolution" value="2.86 A"/>
    <property type="chains" value="p=1-82"/>
</dbReference>
<dbReference type="PDB" id="6ZTJ">
    <property type="method" value="EM"/>
    <property type="resolution" value="3.40 A"/>
    <property type="chains" value="AP=1-82"/>
</dbReference>
<dbReference type="PDB" id="6ZTL">
    <property type="method" value="EM"/>
    <property type="resolution" value="3.50 A"/>
    <property type="chains" value="AP=1-82"/>
</dbReference>
<dbReference type="PDB" id="6ZTM">
    <property type="method" value="EM"/>
    <property type="resolution" value="3.30 A"/>
    <property type="chains" value="AP=1-82"/>
</dbReference>
<dbReference type="PDB" id="6ZTN">
    <property type="method" value="EM"/>
    <property type="resolution" value="3.90 A"/>
    <property type="chains" value="AP=1-82"/>
</dbReference>
<dbReference type="PDB" id="6ZTO">
    <property type="method" value="EM"/>
    <property type="resolution" value="3.00 A"/>
    <property type="chains" value="AP=1-82"/>
</dbReference>
<dbReference type="PDB" id="6ZTP">
    <property type="method" value="EM"/>
    <property type="resolution" value="3.00 A"/>
    <property type="chains" value="AP=1-82"/>
</dbReference>
<dbReference type="PDB" id="6ZU1">
    <property type="method" value="EM"/>
    <property type="resolution" value="3.00 A"/>
    <property type="chains" value="AP=1-82"/>
</dbReference>
<dbReference type="PDB" id="7ABZ">
    <property type="method" value="EM"/>
    <property type="resolution" value="3.21 A"/>
    <property type="chains" value="u=1-82"/>
</dbReference>
<dbReference type="PDB" id="7AC7">
    <property type="method" value="EM"/>
    <property type="resolution" value="3.08 A"/>
    <property type="chains" value="u=1-81"/>
</dbReference>
<dbReference type="PDB" id="7ACJ">
    <property type="method" value="EM"/>
    <property type="resolution" value="3.20 A"/>
    <property type="chains" value="u=1-82"/>
</dbReference>
<dbReference type="PDB" id="7ACR">
    <property type="method" value="EM"/>
    <property type="resolution" value="3.44 A"/>
    <property type="chains" value="u=1-82"/>
</dbReference>
<dbReference type="PDB" id="7AFI">
    <property type="method" value="EM"/>
    <property type="resolution" value="3.53 A"/>
    <property type="chains" value="P=1-82"/>
</dbReference>
<dbReference type="PDB" id="7AFL">
    <property type="method" value="EM"/>
    <property type="resolution" value="4.20 A"/>
    <property type="chains" value="P=1-82"/>
</dbReference>
<dbReference type="PDB" id="7AFO">
    <property type="method" value="EM"/>
    <property type="resolution" value="3.93 A"/>
    <property type="chains" value="P=1-82"/>
</dbReference>
<dbReference type="PDB" id="7B5K">
    <property type="method" value="EM"/>
    <property type="resolution" value="2.90 A"/>
    <property type="chains" value="p=1-82"/>
</dbReference>
<dbReference type="PDB" id="7BOD">
    <property type="method" value="EM"/>
    <property type="resolution" value="2.88 A"/>
    <property type="chains" value="P=1-82"/>
</dbReference>
<dbReference type="PDB" id="7BOE">
    <property type="method" value="EM"/>
    <property type="resolution" value="2.90 A"/>
    <property type="chains" value="P=1-82"/>
</dbReference>
<dbReference type="PDB" id="7BOF">
    <property type="method" value="EM"/>
    <property type="resolution" value="2.92 A"/>
    <property type="chains" value="P=1-82"/>
</dbReference>
<dbReference type="PDB" id="7BOG">
    <property type="method" value="EM"/>
    <property type="resolution" value="2.75 A"/>
    <property type="chains" value="P=1-82"/>
</dbReference>
<dbReference type="PDB" id="7BOH">
    <property type="method" value="EM"/>
    <property type="resolution" value="2.82 A"/>
    <property type="chains" value="P=1-82"/>
</dbReference>
<dbReference type="PDB" id="7BOI">
    <property type="method" value="EM"/>
    <property type="resolution" value="2.98 A"/>
    <property type="chains" value="P=1-82"/>
</dbReference>
<dbReference type="PDB" id="7D6Z">
    <property type="method" value="EM"/>
    <property type="resolution" value="3.40 A"/>
    <property type="chains" value="w=1-82"/>
</dbReference>
<dbReference type="PDB" id="7D80">
    <property type="method" value="EM"/>
    <property type="resolution" value="4.10 A"/>
    <property type="chains" value="Q=1-82"/>
</dbReference>
<dbReference type="PDB" id="7JSS">
    <property type="method" value="EM"/>
    <property type="resolution" value="3.70 A"/>
    <property type="chains" value="U=1-82"/>
</dbReference>
<dbReference type="PDB" id="7JSW">
    <property type="method" value="EM"/>
    <property type="resolution" value="3.80 A"/>
    <property type="chains" value="U=1-82"/>
</dbReference>
<dbReference type="PDB" id="7JSZ">
    <property type="method" value="EM"/>
    <property type="resolution" value="3.70 A"/>
    <property type="chains" value="U=1-82"/>
</dbReference>
<dbReference type="PDB" id="7JT1">
    <property type="method" value="EM"/>
    <property type="resolution" value="3.30 A"/>
    <property type="chains" value="U=1-82"/>
</dbReference>
<dbReference type="PDB" id="7JT2">
    <property type="method" value="EM"/>
    <property type="resolution" value="3.50 A"/>
    <property type="chains" value="U=1-82"/>
</dbReference>
<dbReference type="PDB" id="7JT3">
    <property type="method" value="EM"/>
    <property type="resolution" value="3.70 A"/>
    <property type="chains" value="U=1-82"/>
</dbReference>
<dbReference type="PDB" id="7K00">
    <property type="method" value="EM"/>
    <property type="resolution" value="1.98 A"/>
    <property type="chains" value="P=1-82"/>
</dbReference>
<dbReference type="PDB" id="7K50">
    <property type="method" value="EM"/>
    <property type="resolution" value="3.40 A"/>
    <property type="chains" value="U=1-82"/>
</dbReference>
<dbReference type="PDB" id="7K51">
    <property type="method" value="EM"/>
    <property type="resolution" value="3.50 A"/>
    <property type="chains" value="U=1-82"/>
</dbReference>
<dbReference type="PDB" id="7K52">
    <property type="method" value="EM"/>
    <property type="resolution" value="3.40 A"/>
    <property type="chains" value="U=1-82"/>
</dbReference>
<dbReference type="PDB" id="7K53">
    <property type="method" value="EM"/>
    <property type="resolution" value="3.20 A"/>
    <property type="chains" value="U=1-82"/>
</dbReference>
<dbReference type="PDB" id="7K54">
    <property type="method" value="EM"/>
    <property type="resolution" value="3.20 A"/>
    <property type="chains" value="U=1-82"/>
</dbReference>
<dbReference type="PDB" id="7K55">
    <property type="method" value="EM"/>
    <property type="resolution" value="3.30 A"/>
    <property type="chains" value="U=1-82"/>
</dbReference>
<dbReference type="PDB" id="7LV0">
    <property type="method" value="EM"/>
    <property type="resolution" value="3.20 A"/>
    <property type="chains" value="U=1-82"/>
</dbReference>
<dbReference type="PDB" id="7M5D">
    <property type="method" value="EM"/>
    <property type="resolution" value="2.80 A"/>
    <property type="chains" value="u=1-82"/>
</dbReference>
<dbReference type="PDB" id="7N1P">
    <property type="method" value="EM"/>
    <property type="resolution" value="2.33 A"/>
    <property type="chains" value="SP=1-82"/>
</dbReference>
<dbReference type="PDB" id="7N2C">
    <property type="method" value="EM"/>
    <property type="resolution" value="2.72 A"/>
    <property type="chains" value="SP=1-82"/>
</dbReference>
<dbReference type="PDB" id="7N2U">
    <property type="method" value="EM"/>
    <property type="resolution" value="2.53 A"/>
    <property type="chains" value="SP=1-82"/>
</dbReference>
<dbReference type="PDB" id="7N2V">
    <property type="method" value="EM"/>
    <property type="resolution" value="2.54 A"/>
    <property type="chains" value="SP=1-82"/>
</dbReference>
<dbReference type="PDB" id="7N30">
    <property type="method" value="EM"/>
    <property type="resolution" value="2.66 A"/>
    <property type="chains" value="SP=1-82"/>
</dbReference>
<dbReference type="PDB" id="7N31">
    <property type="method" value="EM"/>
    <property type="resolution" value="2.69 A"/>
    <property type="chains" value="SP=1-82"/>
</dbReference>
<dbReference type="PDB" id="7NAR">
    <property type="method" value="EM"/>
    <property type="resolution" value="3.00 A"/>
    <property type="chains" value="P=1-82"/>
</dbReference>
<dbReference type="PDB" id="7NAS">
    <property type="method" value="EM"/>
    <property type="resolution" value="3.31 A"/>
    <property type="chains" value="P=1-82"/>
</dbReference>
<dbReference type="PDB" id="7NAT">
    <property type="method" value="EM"/>
    <property type="resolution" value="3.59 A"/>
    <property type="chains" value="P=1-82"/>
</dbReference>
<dbReference type="PDB" id="7NAU">
    <property type="method" value="EM"/>
    <property type="resolution" value="3.78 A"/>
    <property type="chains" value="P=1-82"/>
</dbReference>
<dbReference type="PDB" id="7NAV">
    <property type="method" value="EM"/>
    <property type="resolution" value="4.80 A"/>
    <property type="chains" value="P=1-82"/>
</dbReference>
<dbReference type="PDB" id="7NAX">
    <property type="method" value="EM"/>
    <property type="resolution" value="2.96 A"/>
    <property type="chains" value="P=1-82"/>
</dbReference>
<dbReference type="PDB" id="7NBU">
    <property type="method" value="EM"/>
    <property type="resolution" value="3.11 A"/>
    <property type="chains" value="P=1-81"/>
</dbReference>
<dbReference type="PDB" id="7O19">
    <property type="method" value="EM"/>
    <property type="resolution" value="2.90 A"/>
    <property type="chains" value="AP=1-82"/>
</dbReference>
<dbReference type="PDB" id="7O1A">
    <property type="method" value="EM"/>
    <property type="resolution" value="2.40 A"/>
    <property type="chains" value="AP=1-82"/>
</dbReference>
<dbReference type="PDB" id="7O1C">
    <property type="method" value="EM"/>
    <property type="resolution" value="2.60 A"/>
    <property type="chains" value="AP=1-82"/>
</dbReference>
<dbReference type="PDB" id="7O5H">
    <property type="method" value="EM"/>
    <property type="resolution" value="3.10 A"/>
    <property type="chains" value="P=1-82"/>
</dbReference>
<dbReference type="PDB" id="7OE0">
    <property type="method" value="EM"/>
    <property type="resolution" value="2.69 A"/>
    <property type="chains" value="P=1-82"/>
</dbReference>
<dbReference type="PDB" id="7OE1">
    <property type="method" value="EM"/>
    <property type="resolution" value="3.05 A"/>
    <property type="chains" value="P=1-82"/>
</dbReference>
<dbReference type="PDB" id="7OI0">
    <property type="method" value="EM"/>
    <property type="resolution" value="2.76 A"/>
    <property type="chains" value="P=1-82"/>
</dbReference>
<dbReference type="PDB" id="7OIZ">
    <property type="method" value="EM"/>
    <property type="resolution" value="2.90 A"/>
    <property type="chains" value="P=1-82"/>
</dbReference>
<dbReference type="PDB" id="7OJ0">
    <property type="method" value="EM"/>
    <property type="resolution" value="3.50 A"/>
    <property type="chains" value="P=1-82"/>
</dbReference>
<dbReference type="PDB" id="7P3K">
    <property type="method" value="EM"/>
    <property type="resolution" value="2.90 A"/>
    <property type="chains" value="P=1-82"/>
</dbReference>
<dbReference type="PDB" id="7PJV">
    <property type="method" value="EM"/>
    <property type="resolution" value="3.10 A"/>
    <property type="chains" value="p=1-82"/>
</dbReference>
<dbReference type="PDB" id="7PJY">
    <property type="method" value="EM"/>
    <property type="resolution" value="3.10 A"/>
    <property type="chains" value="p=1-82"/>
</dbReference>
<dbReference type="PDB" id="7QG8">
    <property type="method" value="EM"/>
    <property type="resolution" value="3.97 A"/>
    <property type="chains" value="I=1-82"/>
</dbReference>
<dbReference type="PDB" id="7QGN">
    <property type="method" value="EM"/>
    <property type="resolution" value="3.37 A"/>
    <property type="chains" value="I=1-82"/>
</dbReference>
<dbReference type="PDB" id="7QGR">
    <property type="method" value="EM"/>
    <property type="resolution" value="5.70 A"/>
    <property type="chains" value="G=1-82"/>
</dbReference>
<dbReference type="PDB" id="7S1G">
    <property type="method" value="EM"/>
    <property type="resolution" value="2.48 A"/>
    <property type="chains" value="x=1-82"/>
</dbReference>
<dbReference type="PDB" id="7S1H">
    <property type="method" value="EM"/>
    <property type="resolution" value="2.35 A"/>
    <property type="chains" value="x=1-82"/>
</dbReference>
<dbReference type="PDB" id="7S1I">
    <property type="method" value="EM"/>
    <property type="resolution" value="2.48 A"/>
    <property type="chains" value="x=1-82"/>
</dbReference>
<dbReference type="PDB" id="7S1J">
    <property type="method" value="EM"/>
    <property type="resolution" value="2.47 A"/>
    <property type="chains" value="x=1-82"/>
</dbReference>
<dbReference type="PDB" id="7S1K">
    <property type="method" value="EM"/>
    <property type="resolution" value="2.42 A"/>
    <property type="chains" value="x=1-82"/>
</dbReference>
<dbReference type="PDB" id="7SA4">
    <property type="method" value="EM"/>
    <property type="resolution" value="2.55 A"/>
    <property type="chains" value="u=1-82"/>
</dbReference>
<dbReference type="PDB" id="7SS9">
    <property type="method" value="EM"/>
    <property type="resolution" value="3.90 A"/>
    <property type="chains" value="U=1-82"/>
</dbReference>
<dbReference type="PDB" id="7SSD">
    <property type="method" value="EM"/>
    <property type="resolution" value="3.30 A"/>
    <property type="chains" value="U=1-82"/>
</dbReference>
<dbReference type="PDB" id="7SSL">
    <property type="method" value="EM"/>
    <property type="resolution" value="3.80 A"/>
    <property type="chains" value="U=1-82"/>
</dbReference>
<dbReference type="PDB" id="7SSN">
    <property type="method" value="EM"/>
    <property type="resolution" value="3.20 A"/>
    <property type="chains" value="U=1-82"/>
</dbReference>
<dbReference type="PDB" id="7SSO">
    <property type="method" value="EM"/>
    <property type="resolution" value="3.20 A"/>
    <property type="chains" value="U=1-82"/>
</dbReference>
<dbReference type="PDB" id="7SSW">
    <property type="method" value="EM"/>
    <property type="resolution" value="3.80 A"/>
    <property type="chains" value="U=1-82"/>
</dbReference>
<dbReference type="PDB" id="7ST2">
    <property type="method" value="EM"/>
    <property type="resolution" value="2.90 A"/>
    <property type="chains" value="U=1-82"/>
</dbReference>
<dbReference type="PDB" id="7ST6">
    <property type="method" value="EM"/>
    <property type="resolution" value="3.00 A"/>
    <property type="chains" value="U=1-82"/>
</dbReference>
<dbReference type="PDB" id="7ST7">
    <property type="method" value="EM"/>
    <property type="resolution" value="3.20 A"/>
    <property type="chains" value="U=1-82"/>
</dbReference>
<dbReference type="PDB" id="7TOS">
    <property type="method" value="EM"/>
    <property type="resolution" value="2.90 A"/>
    <property type="chains" value="S16=1-82"/>
</dbReference>
<dbReference type="PDB" id="7UG7">
    <property type="method" value="EM"/>
    <property type="resolution" value="2.58 A"/>
    <property type="chains" value="SP=1-82"/>
</dbReference>
<dbReference type="PDB" id="7UPH">
    <property type="method" value="EM"/>
    <property type="resolution" value="4.18 A"/>
    <property type="chains" value="C=1-82"/>
</dbReference>
<dbReference type="PDB" id="7Y7C">
    <property type="method" value="EM"/>
    <property type="resolution" value="2.51 A"/>
    <property type="chains" value="P=1-82"/>
</dbReference>
<dbReference type="PDB" id="7Y7D">
    <property type="method" value="EM"/>
    <property type="resolution" value="2.58 A"/>
    <property type="chains" value="P=1-82"/>
</dbReference>
<dbReference type="PDB" id="7Y7E">
    <property type="method" value="EM"/>
    <property type="resolution" value="2.41 A"/>
    <property type="chains" value="P=1-82"/>
</dbReference>
<dbReference type="PDB" id="7Y7F">
    <property type="method" value="EM"/>
    <property type="resolution" value="2.43 A"/>
    <property type="chains" value="P=1-82"/>
</dbReference>
<dbReference type="PDB" id="7Y7G">
    <property type="method" value="EM"/>
    <property type="resolution" value="2.34 A"/>
    <property type="chains" value="P=1-82"/>
</dbReference>
<dbReference type="PDB" id="7Y7H">
    <property type="method" value="EM"/>
    <property type="resolution" value="2.51 A"/>
    <property type="chains" value="P=1-82"/>
</dbReference>
<dbReference type="PDB" id="7ZTA">
    <property type="method" value="EM"/>
    <property type="resolution" value="2.70 A"/>
    <property type="chains" value="S161=1-82"/>
</dbReference>
<dbReference type="PDB" id="8A3L">
    <property type="method" value="EM"/>
    <property type="resolution" value="3.42 A"/>
    <property type="chains" value="P=1-82"/>
</dbReference>
<dbReference type="PDB" id="8AKN">
    <property type="method" value="EM"/>
    <property type="resolution" value="2.30 A"/>
    <property type="chains" value="Q=1-82"/>
</dbReference>
<dbReference type="PDB" id="8AM9">
    <property type="method" value="EM"/>
    <property type="resolution" value="2.80 A"/>
    <property type="chains" value="Q=1-82"/>
</dbReference>
<dbReference type="PDB" id="8AYE">
    <property type="method" value="EM"/>
    <property type="resolution" value="1.96 A"/>
    <property type="chains" value="P=1-82"/>
</dbReference>
<dbReference type="PDB" id="8B0X">
    <property type="method" value="EM"/>
    <property type="resolution" value="1.55 A"/>
    <property type="chains" value="P=1-82"/>
</dbReference>
<dbReference type="PDB" id="8B7Y">
    <property type="method" value="EM"/>
    <property type="resolution" value="3.00 A"/>
    <property type="chains" value="u=1-82"/>
</dbReference>
<dbReference type="PDB" id="8BF7">
    <property type="method" value="EM"/>
    <property type="resolution" value="2.33 A"/>
    <property type="chains" value="t=1-82"/>
</dbReference>
<dbReference type="PDB" id="8BGE">
    <property type="method" value="EM"/>
    <property type="resolution" value="2.11 A"/>
    <property type="chains" value="t=1-82"/>
</dbReference>
<dbReference type="PDB" id="8BGH">
    <property type="method" value="EM"/>
    <property type="resolution" value="2.88 A"/>
    <property type="chains" value="t=1-82"/>
</dbReference>
<dbReference type="PDB" id="8BH4">
    <property type="method" value="EM"/>
    <property type="resolution" value="2.62 A"/>
    <property type="chains" value="t=1-82"/>
</dbReference>
<dbReference type="PDB" id="8BHJ">
    <property type="method" value="EM"/>
    <property type="resolution" value="2.81 A"/>
    <property type="chains" value="t=1-82"/>
</dbReference>
<dbReference type="PDB" id="8BHL">
    <property type="method" value="EM"/>
    <property type="resolution" value="2.21 A"/>
    <property type="chains" value="t=1-82"/>
</dbReference>
<dbReference type="PDB" id="8BHN">
    <property type="method" value="EM"/>
    <property type="resolution" value="2.85 A"/>
    <property type="chains" value="t=1-82"/>
</dbReference>
<dbReference type="PDB" id="8BHP">
    <property type="method" value="EM"/>
    <property type="resolution" value="2.37 A"/>
    <property type="chains" value="t=1-82"/>
</dbReference>
<dbReference type="PDB" id="8BIL">
    <property type="method" value="EM"/>
    <property type="resolution" value="2.04 A"/>
    <property type="chains" value="t=1-82"/>
</dbReference>
<dbReference type="PDB" id="8BIM">
    <property type="method" value="EM"/>
    <property type="resolution" value="2.04 A"/>
    <property type="chains" value="t=1-82"/>
</dbReference>
<dbReference type="PDB" id="8CAI">
    <property type="method" value="EM"/>
    <property type="resolution" value="2.08 A"/>
    <property type="chains" value="P=1-82"/>
</dbReference>
<dbReference type="PDB" id="8CEP">
    <property type="method" value="EM"/>
    <property type="resolution" value="2.04 A"/>
    <property type="chains" value="P=1-82"/>
</dbReference>
<dbReference type="PDB" id="8CGJ">
    <property type="method" value="EM"/>
    <property type="resolution" value="1.79 A"/>
    <property type="chains" value="P=1-82"/>
</dbReference>
<dbReference type="PDB" id="8CGR">
    <property type="method" value="EM"/>
    <property type="resolution" value="2.12 A"/>
    <property type="chains" value="P=1-82"/>
</dbReference>
<dbReference type="PDB" id="8CGU">
    <property type="method" value="EM"/>
    <property type="resolution" value="1.89 A"/>
    <property type="chains" value="P=1-82"/>
</dbReference>
<dbReference type="PDB" id="8EIU">
    <property type="method" value="EM"/>
    <property type="resolution" value="2.24 A"/>
    <property type="chains" value="P=1-82"/>
</dbReference>
<dbReference type="PDB" id="8EKC">
    <property type="method" value="EM"/>
    <property type="resolution" value="2.70 A"/>
    <property type="chains" value="p=1-82"/>
</dbReference>
<dbReference type="PDB" id="8EMM">
    <property type="method" value="EM"/>
    <property type="resolution" value="2.10 A"/>
    <property type="chains" value="P=1-82"/>
</dbReference>
<dbReference type="PDB" id="8EYQ">
    <property type="method" value="EM"/>
    <property type="resolution" value="3.30 A"/>
    <property type="chains" value="P=1-82"/>
</dbReference>
<dbReference type="PDB" id="8EYT">
    <property type="method" value="EM"/>
    <property type="resolution" value="2.80 A"/>
    <property type="chains" value="P=1-82"/>
</dbReference>
<dbReference type="PDB" id="8FIZ">
    <property type="method" value="EM"/>
    <property type="resolution" value="3.80 A"/>
    <property type="chains" value="AO=1-82"/>
</dbReference>
<dbReference type="PDB" id="8FTO">
    <property type="method" value="EM"/>
    <property type="resolution" value="1.85 A"/>
    <property type="chains" value="P=1-82"/>
</dbReference>
<dbReference type="PDB" id="8FZD">
    <property type="method" value="EM"/>
    <property type="resolution" value="3.10 A"/>
    <property type="chains" value="p=1-82"/>
</dbReference>
<dbReference type="PDB" id="8FZE">
    <property type="method" value="EM"/>
    <property type="resolution" value="3.00 A"/>
    <property type="chains" value="p=1-82"/>
</dbReference>
<dbReference type="PDB" id="8FZF">
    <property type="method" value="EM"/>
    <property type="resolution" value="3.20 A"/>
    <property type="chains" value="p=1-82"/>
</dbReference>
<dbReference type="PDB" id="8FZG">
    <property type="method" value="EM"/>
    <property type="resolution" value="3.10 A"/>
    <property type="chains" value="p=1-82"/>
</dbReference>
<dbReference type="PDB" id="8FZH">
    <property type="method" value="EM"/>
    <property type="resolution" value="2.90 A"/>
    <property type="chains" value="p=1-82"/>
</dbReference>
<dbReference type="PDB" id="8FZI">
    <property type="method" value="EM"/>
    <property type="resolution" value="3.10 A"/>
    <property type="chains" value="p=1-82"/>
</dbReference>
<dbReference type="PDB" id="8FZJ">
    <property type="method" value="EM"/>
    <property type="resolution" value="3.00 A"/>
    <property type="chains" value="p=1-82"/>
</dbReference>
<dbReference type="PDB" id="8G2U">
    <property type="method" value="EM"/>
    <property type="resolution" value="3.00 A"/>
    <property type="chains" value="o=1-82"/>
</dbReference>
<dbReference type="PDB" id="8G31">
    <property type="method" value="EM"/>
    <property type="resolution" value="3.20 A"/>
    <property type="chains" value="o=1-82"/>
</dbReference>
<dbReference type="PDB" id="8G34">
    <property type="method" value="EM"/>
    <property type="resolution" value="3.20 A"/>
    <property type="chains" value="o=1-82"/>
</dbReference>
<dbReference type="PDB" id="8G38">
    <property type="method" value="EM"/>
    <property type="resolution" value="3.20 A"/>
    <property type="chains" value="o=1-82"/>
</dbReference>
<dbReference type="PDB" id="8G6W">
    <property type="method" value="EM"/>
    <property type="resolution" value="2.02 A"/>
    <property type="chains" value="P=1-82"/>
</dbReference>
<dbReference type="PDB" id="8G7P">
    <property type="method" value="EM"/>
    <property type="resolution" value="2.90 A"/>
    <property type="chains" value="p=1-82"/>
</dbReference>
<dbReference type="PDB" id="8G7Q">
    <property type="method" value="EM"/>
    <property type="resolution" value="3.10 A"/>
    <property type="chains" value="p=1-82"/>
</dbReference>
<dbReference type="PDB" id="8G7R">
    <property type="method" value="EM"/>
    <property type="resolution" value="2.80 A"/>
    <property type="chains" value="p=1-82"/>
</dbReference>
<dbReference type="PDB" id="8G7S">
    <property type="method" value="EM"/>
    <property type="resolution" value="3.10 A"/>
    <property type="chains" value="p=1-82"/>
</dbReference>
<dbReference type="PDB" id="8GHU">
    <property type="method" value="EM"/>
    <property type="resolution" value="3.00 A"/>
    <property type="chains" value="p=1-82"/>
</dbReference>
<dbReference type="PDB" id="8HSP">
    <property type="method" value="EM"/>
    <property type="resolution" value="2.32 A"/>
    <property type="chains" value="P=1-82"/>
</dbReference>
<dbReference type="PDB" id="8HTZ">
    <property type="method" value="EM"/>
    <property type="resolution" value="2.40 A"/>
    <property type="chains" value="P=1-82"/>
</dbReference>
<dbReference type="PDB" id="8HU1">
    <property type="method" value="EM"/>
    <property type="resolution" value="2.69 A"/>
    <property type="chains" value="P=1-82"/>
</dbReference>
<dbReference type="PDB" id="8IFB">
    <property type="method" value="EM"/>
    <property type="resolution" value="2.43 A"/>
    <property type="chains" value="P=1-82"/>
</dbReference>
<dbReference type="PDB" id="8IFC">
    <property type="method" value="EM"/>
    <property type="resolution" value="2.90 A"/>
    <property type="chains" value="P=1-82"/>
</dbReference>
<dbReference type="PDB" id="8JSG">
    <property type="method" value="EM"/>
    <property type="resolution" value="4.60 A"/>
    <property type="chains" value="y=1-82"/>
</dbReference>
<dbReference type="PDB" id="8JSH">
    <property type="method" value="EM"/>
    <property type="resolution" value="4.40 A"/>
    <property type="chains" value="y=1-82"/>
</dbReference>
<dbReference type="PDB" id="8K3O">
    <property type="method" value="EM"/>
    <property type="resolution" value="3.88 A"/>
    <property type="chains" value="P=1-82"/>
</dbReference>
<dbReference type="PDB" id="8K4E">
    <property type="method" value="EM"/>
    <property type="resolution" value="3.40 A"/>
    <property type="chains" value="P=1-82"/>
</dbReference>
<dbReference type="PDB" id="8P16">
    <property type="method" value="EM"/>
    <property type="resolution" value="2.77 A"/>
    <property type="chains" value="u=1-82"/>
</dbReference>
<dbReference type="PDB" id="8P17">
    <property type="method" value="EM"/>
    <property type="resolution" value="2.78 A"/>
    <property type="chains" value="u=1-82"/>
</dbReference>
<dbReference type="PDB" id="8P18">
    <property type="method" value="EM"/>
    <property type="resolution" value="2.77 A"/>
    <property type="chains" value="u=1-82"/>
</dbReference>
<dbReference type="PDB" id="8PEG">
    <property type="method" value="EM"/>
    <property type="resolution" value="3.30 A"/>
    <property type="chains" value="P=1-82"/>
</dbReference>
<dbReference type="PDB" id="8PHJ">
    <property type="method" value="EM"/>
    <property type="resolution" value="3.67 A"/>
    <property type="chains" value="P=1-82"/>
</dbReference>
<dbReference type="PDB" id="8PKL">
    <property type="method" value="EM"/>
    <property type="resolution" value="3.09 A"/>
    <property type="chains" value="P=1-82"/>
</dbReference>
<dbReference type="PDB" id="8PVA">
    <property type="method" value="EM"/>
    <property type="resolution" value="4.50 A"/>
    <property type="chains" value="P=1-82"/>
</dbReference>
<dbReference type="PDB" id="8Q4F">
    <property type="method" value="EM"/>
    <property type="resolution" value="3.10 A"/>
    <property type="chains" value="P=1-82"/>
</dbReference>
<dbReference type="PDB" id="8QK7">
    <property type="method" value="EM"/>
    <property type="resolution" value="2.77 A"/>
    <property type="chains" value="u=1-82"/>
</dbReference>
<dbReference type="PDB" id="8QOA">
    <property type="method" value="EM"/>
    <property type="resolution" value="2.00 A"/>
    <property type="chains" value="P=1-82"/>
</dbReference>
<dbReference type="PDB" id="8R3V">
    <property type="method" value="EM"/>
    <property type="resolution" value="3.28 A"/>
    <property type="chains" value="P1=1-82"/>
</dbReference>
<dbReference type="PDB" id="8R6C">
    <property type="method" value="EM"/>
    <property type="resolution" value="2.20 A"/>
    <property type="chains" value="P=1-82"/>
</dbReference>
<dbReference type="PDB" id="8R8M">
    <property type="method" value="EM"/>
    <property type="resolution" value="2.40 A"/>
    <property type="chains" value="P=1-82"/>
</dbReference>
<dbReference type="PDB" id="8RCL">
    <property type="method" value="EM"/>
    <property type="resolution" value="3.49 A"/>
    <property type="chains" value="P1=1-82"/>
</dbReference>
<dbReference type="PDB" id="8RCM">
    <property type="method" value="EM"/>
    <property type="resolution" value="3.59 A"/>
    <property type="chains" value="P1=1-82"/>
</dbReference>
<dbReference type="PDB" id="8RCS">
    <property type="method" value="EM"/>
    <property type="resolution" value="4.46 A"/>
    <property type="chains" value="P1=1-82"/>
</dbReference>
<dbReference type="PDB" id="8RCT">
    <property type="method" value="EM"/>
    <property type="resolution" value="5.32 A"/>
    <property type="chains" value="P1=1-82"/>
</dbReference>
<dbReference type="PDB" id="8SYL">
    <property type="method" value="EM"/>
    <property type="resolution" value="2.90 A"/>
    <property type="chains" value="p=1-82"/>
</dbReference>
<dbReference type="PDB" id="8T5D">
    <property type="method" value="EM"/>
    <property type="resolution" value="3.20 A"/>
    <property type="chains" value="o=1-82"/>
</dbReference>
<dbReference type="PDB" id="8T5H">
    <property type="method" value="EM"/>
    <property type="resolution" value="3.30 A"/>
    <property type="chains" value="o=1-82"/>
</dbReference>
<dbReference type="PDB" id="8UPO">
    <property type="method" value="EM"/>
    <property type="resolution" value="5.50 A"/>
    <property type="chains" value="U=1-82"/>
</dbReference>
<dbReference type="PDB" id="8UPR">
    <property type="method" value="EM"/>
    <property type="resolution" value="5.30 A"/>
    <property type="chains" value="U=1-82"/>
</dbReference>
<dbReference type="PDB" id="8UQL">
    <property type="method" value="EM"/>
    <property type="resolution" value="3.20 A"/>
    <property type="chains" value="U=1-82"/>
</dbReference>
<dbReference type="PDB" id="8UQM">
    <property type="method" value="EM"/>
    <property type="resolution" value="5.30 A"/>
    <property type="chains" value="U=1-82"/>
</dbReference>
<dbReference type="PDB" id="8UQP">
    <property type="method" value="EM"/>
    <property type="resolution" value="3.80 A"/>
    <property type="chains" value="U=1-82"/>
</dbReference>
<dbReference type="PDB" id="8UR0">
    <property type="method" value="EM"/>
    <property type="resolution" value="3.40 A"/>
    <property type="chains" value="U=1-82"/>
</dbReference>
<dbReference type="PDB" id="8URH">
    <property type="method" value="EM"/>
    <property type="resolution" value="5.70 A"/>
    <property type="chains" value="U=1-82"/>
</dbReference>
<dbReference type="PDB" id="8URI">
    <property type="method" value="EM"/>
    <property type="resolution" value="5.30 A"/>
    <property type="chains" value="U=1-82"/>
</dbReference>
<dbReference type="PDB" id="8URX">
    <property type="method" value="EM"/>
    <property type="resolution" value="6.60 A"/>
    <property type="chains" value="U=1-82"/>
</dbReference>
<dbReference type="PDB" id="8URY">
    <property type="method" value="EM"/>
    <property type="resolution" value="3.10 A"/>
    <property type="chains" value="U=1-82"/>
</dbReference>
<dbReference type="PDB" id="8VS9">
    <property type="method" value="EM"/>
    <property type="resolution" value="3.90 A"/>
    <property type="chains" value="S16=1-82"/>
</dbReference>
<dbReference type="PDB" id="8VSA">
    <property type="method" value="EM"/>
    <property type="resolution" value="3.70 A"/>
    <property type="chains" value="S16=1-82"/>
</dbReference>
<dbReference type="PDB" id="8YUO">
    <property type="method" value="EM"/>
    <property type="resolution" value="2.25 A"/>
    <property type="chains" value="P=1-82"/>
</dbReference>
<dbReference type="PDB" id="8YUP">
    <property type="method" value="EM"/>
    <property type="resolution" value="2.39 A"/>
    <property type="chains" value="P=1-82"/>
</dbReference>
<dbReference type="PDB" id="8YUQ">
    <property type="method" value="EM"/>
    <property type="resolution" value="2.41 A"/>
    <property type="chains" value="P=1-82"/>
</dbReference>
<dbReference type="PDB" id="8YUR">
    <property type="method" value="EM"/>
    <property type="resolution" value="2.47 A"/>
    <property type="chains" value="P=1-82"/>
</dbReference>
<dbReference type="PDB" id="8YUS">
    <property type="method" value="EM"/>
    <property type="resolution" value="2.43 A"/>
    <property type="chains" value="P=1-82"/>
</dbReference>
<dbReference type="PDB" id="9DUK">
    <property type="method" value="EM"/>
    <property type="resolution" value="2.56 A"/>
    <property type="chains" value="P=1-82"/>
</dbReference>
<dbReference type="PDB" id="9DUL">
    <property type="method" value="EM"/>
    <property type="resolution" value="2.56 A"/>
    <property type="chains" value="P=1-82"/>
</dbReference>
<dbReference type="PDB" id="9FBV">
    <property type="method" value="EM"/>
    <property type="resolution" value="2.40 A"/>
    <property type="chains" value="P=1-82"/>
</dbReference>
<dbReference type="PDB" id="9GFT">
    <property type="method" value="EM"/>
    <property type="resolution" value="3.10 A"/>
    <property type="chains" value="AO/I=1-82"/>
</dbReference>
<dbReference type="PDB" id="9GGR">
    <property type="method" value="EM"/>
    <property type="resolution" value="3.20 A"/>
    <property type="chains" value="AO/I=1-82"/>
</dbReference>
<dbReference type="PDB" id="9GUP">
    <property type="method" value="EM"/>
    <property type="resolution" value="2.80 A"/>
    <property type="chains" value="Q=1-82"/>
</dbReference>
<dbReference type="PDB" id="9GUQ">
    <property type="method" value="EM"/>
    <property type="resolution" value="3.10 A"/>
    <property type="chains" value="Q=1-82"/>
</dbReference>
<dbReference type="PDB" id="9GUS">
    <property type="method" value="EM"/>
    <property type="resolution" value="3.50 A"/>
    <property type="chains" value="Q=1-82"/>
</dbReference>
<dbReference type="PDB" id="9GUT">
    <property type="method" value="EM"/>
    <property type="resolution" value="2.80 A"/>
    <property type="chains" value="Q=1-82"/>
</dbReference>
<dbReference type="PDB" id="9GUU">
    <property type="method" value="EM"/>
    <property type="resolution" value="2.50 A"/>
    <property type="chains" value="Q=1-82"/>
</dbReference>
<dbReference type="PDB" id="9GUV">
    <property type="method" value="EM"/>
    <property type="resolution" value="3.00 A"/>
    <property type="chains" value="Q=1-82"/>
</dbReference>
<dbReference type="PDB" id="9GUW">
    <property type="method" value="EM"/>
    <property type="resolution" value="3.10 A"/>
    <property type="chains" value="Q=1-82"/>
</dbReference>
<dbReference type="PDB" id="9GUX">
    <property type="method" value="EM"/>
    <property type="resolution" value="3.30 A"/>
    <property type="chains" value="Q=1-82"/>
</dbReference>
<dbReference type="PDB" id="9MOR">
    <property type="method" value="EM"/>
    <property type="resolution" value="2.65 A"/>
    <property type="chains" value="u=1-82"/>
</dbReference>
<dbReference type="PDB" id="9MQ4">
    <property type="method" value="EM"/>
    <property type="resolution" value="2.78 A"/>
    <property type="chains" value="u=1-82"/>
</dbReference>
<dbReference type="PDBsum" id="1ML5"/>
<dbReference type="PDBsum" id="2YKR"/>
<dbReference type="PDBsum" id="3IY8"/>
<dbReference type="PDBsum" id="3J9Y"/>
<dbReference type="PDBsum" id="3J9Z"/>
<dbReference type="PDBsum" id="3JA1"/>
<dbReference type="PDBsum" id="3JBU"/>
<dbReference type="PDBsum" id="3JBV"/>
<dbReference type="PDBsum" id="3JCD"/>
<dbReference type="PDBsum" id="3JCE"/>
<dbReference type="PDBsum" id="3JCJ"/>
<dbReference type="PDBsum" id="3JCN"/>
<dbReference type="PDBsum" id="4A2I"/>
<dbReference type="PDBsum" id="4ADV"/>
<dbReference type="PDBsum" id="4U1U"/>
<dbReference type="PDBsum" id="4U1V"/>
<dbReference type="PDBsum" id="4U20"/>
<dbReference type="PDBsum" id="4U24"/>
<dbReference type="PDBsum" id="4U25"/>
<dbReference type="PDBsum" id="4U26"/>
<dbReference type="PDBsum" id="4U27"/>
<dbReference type="PDBsum" id="4V47"/>
<dbReference type="PDBsum" id="4V48"/>
<dbReference type="PDBsum" id="4V4H"/>
<dbReference type="PDBsum" id="4V4Q"/>
<dbReference type="PDBsum" id="4V4V"/>
<dbReference type="PDBsum" id="4V4W"/>
<dbReference type="PDBsum" id="4V50"/>
<dbReference type="PDBsum" id="4V52"/>
<dbReference type="PDBsum" id="4V53"/>
<dbReference type="PDBsum" id="4V54"/>
<dbReference type="PDBsum" id="4V55"/>
<dbReference type="PDBsum" id="4V56"/>
<dbReference type="PDBsum" id="4V57"/>
<dbReference type="PDBsum" id="4V5B"/>
<dbReference type="PDBsum" id="4V5H"/>
<dbReference type="PDBsum" id="4V5Y"/>
<dbReference type="PDBsum" id="4V64"/>
<dbReference type="PDBsum" id="4V65"/>
<dbReference type="PDBsum" id="4V66"/>
<dbReference type="PDBsum" id="4V69"/>
<dbReference type="PDBsum" id="4V6C"/>
<dbReference type="PDBsum" id="4V6D"/>
<dbReference type="PDBsum" id="4V6E"/>
<dbReference type="PDBsum" id="4V6K"/>
<dbReference type="PDBsum" id="4V6L"/>
<dbReference type="PDBsum" id="4V6M"/>
<dbReference type="PDBsum" id="4V6N"/>
<dbReference type="PDBsum" id="4V6O"/>
<dbReference type="PDBsum" id="4V6P"/>
<dbReference type="PDBsum" id="4V6Q"/>
<dbReference type="PDBsum" id="4V6R"/>
<dbReference type="PDBsum" id="4V6S"/>
<dbReference type="PDBsum" id="4V6T"/>
<dbReference type="PDBsum" id="4V6V"/>
<dbReference type="PDBsum" id="4V6Y"/>
<dbReference type="PDBsum" id="4V6Z"/>
<dbReference type="PDBsum" id="4V70"/>
<dbReference type="PDBsum" id="4V71"/>
<dbReference type="PDBsum" id="4V72"/>
<dbReference type="PDBsum" id="4V73"/>
<dbReference type="PDBsum" id="4V74"/>
<dbReference type="PDBsum" id="4V75"/>
<dbReference type="PDBsum" id="4V76"/>
<dbReference type="PDBsum" id="4V77"/>
<dbReference type="PDBsum" id="4V78"/>
<dbReference type="PDBsum" id="4V79"/>
<dbReference type="PDBsum" id="4V7A"/>
<dbReference type="PDBsum" id="4V7B"/>
<dbReference type="PDBsum" id="4V7C"/>
<dbReference type="PDBsum" id="4V7D"/>
<dbReference type="PDBsum" id="4V7I"/>
<dbReference type="PDBsum" id="4V7S"/>
<dbReference type="PDBsum" id="4V7T"/>
<dbReference type="PDBsum" id="4V7U"/>
<dbReference type="PDBsum" id="4V7V"/>
<dbReference type="PDBsum" id="4V85"/>
<dbReference type="PDBsum" id="4V89"/>
<dbReference type="PDBsum" id="4V9C"/>
<dbReference type="PDBsum" id="4V9D"/>
<dbReference type="PDBsum" id="4V9O"/>
<dbReference type="PDBsum" id="4V9P"/>
<dbReference type="PDBsum" id="4WF1"/>
<dbReference type="PDBsum" id="4WOI"/>
<dbReference type="PDBsum" id="4WWW"/>
<dbReference type="PDBsum" id="4YBB"/>
<dbReference type="PDBsum" id="5AFI"/>
<dbReference type="PDBsum" id="5H5U"/>
<dbReference type="PDBsum" id="5IQR"/>
<dbReference type="PDBsum" id="5IT8"/>
<dbReference type="PDBsum" id="5J5B"/>
<dbReference type="PDBsum" id="5J7L"/>
<dbReference type="PDBsum" id="5J88"/>
<dbReference type="PDBsum" id="5J8A"/>
<dbReference type="PDBsum" id="5J91"/>
<dbReference type="PDBsum" id="5JC9"/>
<dbReference type="PDBsum" id="5JTE"/>
<dbReference type="PDBsum" id="5JU8"/>
<dbReference type="PDBsum" id="5KCR"/>
<dbReference type="PDBsum" id="5KCS"/>
<dbReference type="PDBsum" id="5KPS"/>
<dbReference type="PDBsum" id="5KPV"/>
<dbReference type="PDBsum" id="5KPW"/>
<dbReference type="PDBsum" id="5KPX"/>
<dbReference type="PDBsum" id="5L3P"/>
<dbReference type="PDBsum" id="5LZA"/>
<dbReference type="PDBsum" id="5LZB"/>
<dbReference type="PDBsum" id="5LZC"/>
<dbReference type="PDBsum" id="5LZD"/>
<dbReference type="PDBsum" id="5LZE"/>
<dbReference type="PDBsum" id="5LZF"/>
<dbReference type="PDBsum" id="5MDV"/>
<dbReference type="PDBsum" id="5MDW"/>
<dbReference type="PDBsum" id="5MDY"/>
<dbReference type="PDBsum" id="5MDZ"/>
<dbReference type="PDBsum" id="5MGP"/>
<dbReference type="PDBsum" id="5MY1"/>
<dbReference type="PDBsum" id="5NO2"/>
<dbReference type="PDBsum" id="5NO3"/>
<dbReference type="PDBsum" id="5NO4"/>
<dbReference type="PDBsum" id="5NP6"/>
<dbReference type="PDBsum" id="5NWY"/>
<dbReference type="PDBsum" id="5O2R"/>
<dbReference type="PDBsum" id="5U4I"/>
<dbReference type="PDBsum" id="5U9F"/>
<dbReference type="PDBsum" id="5U9G"/>
<dbReference type="PDBsum" id="5UYK"/>
<dbReference type="PDBsum" id="5UYL"/>
<dbReference type="PDBsum" id="5UYM"/>
<dbReference type="PDBsum" id="5UYN"/>
<dbReference type="PDBsum" id="5UYP"/>
<dbReference type="PDBsum" id="5UYQ"/>
<dbReference type="PDBsum" id="5UZ4"/>
<dbReference type="PDBsum" id="5WDT"/>
<dbReference type="PDBsum" id="5WE4"/>
<dbReference type="PDBsum" id="5WE6"/>
<dbReference type="PDBsum" id="5WF0"/>
<dbReference type="PDBsum" id="5WFK"/>
<dbReference type="PDBsum" id="5WFS"/>
<dbReference type="PDBsum" id="6AWB"/>
<dbReference type="PDBsum" id="6AWC"/>
<dbReference type="PDBsum" id="6AWD"/>
<dbReference type="PDBsum" id="6BU8"/>
<dbReference type="PDBsum" id="6BY1"/>
<dbReference type="PDBsum" id="6C4I"/>
<dbReference type="PDBsum" id="6DNC"/>
<dbReference type="PDBsum" id="6ENF"/>
<dbReference type="PDBsum" id="6ENJ"/>
<dbReference type="PDBsum" id="6ENU"/>
<dbReference type="PDBsum" id="6GWT"/>
<dbReference type="PDBsum" id="6GXM"/>
<dbReference type="PDBsum" id="6GXN"/>
<dbReference type="PDBsum" id="6GXO"/>
<dbReference type="PDBsum" id="6GXP"/>
<dbReference type="PDBsum" id="6H4N"/>
<dbReference type="PDBsum" id="6H58"/>
<dbReference type="PDBsum" id="6HRM"/>
<dbReference type="PDBsum" id="6I7V"/>
<dbReference type="PDBsum" id="6NQB"/>
<dbReference type="PDBsum" id="6O7K"/>
<dbReference type="PDBsum" id="6O9J"/>
<dbReference type="PDBsum" id="6O9K"/>
<dbReference type="PDBsum" id="6OFX"/>
<dbReference type="PDBsum" id="6OG7"/>
<dbReference type="PDBsum" id="6OGF"/>
<dbReference type="PDBsum" id="6OGG"/>
<dbReference type="PDBsum" id="6OGI"/>
<dbReference type="PDBsum" id="6OM6"/>
<dbReference type="PDBsum" id="6ORE"/>
<dbReference type="PDBsum" id="6ORL"/>
<dbReference type="PDBsum" id="6OSK"/>
<dbReference type="PDBsum" id="6OSQ"/>
<dbReference type="PDBsum" id="6OST"/>
<dbReference type="PDBsum" id="6OT3"/>
<dbReference type="PDBsum" id="6OUO"/>
<dbReference type="PDBsum" id="6Q98"/>
<dbReference type="PDBsum" id="6Q9A"/>
<dbReference type="PDBsum" id="6SZS"/>
<dbReference type="PDBsum" id="6TBV"/>
<dbReference type="PDBsum" id="6TC3"/>
<dbReference type="PDBsum" id="6VU3"/>
<dbReference type="PDBsum" id="6VWL"/>
<dbReference type="PDBsum" id="6VWM"/>
<dbReference type="PDBsum" id="6VWN"/>
<dbReference type="PDBsum" id="6VYQ"/>
<dbReference type="PDBsum" id="6VYR"/>
<dbReference type="PDBsum" id="6VYS"/>
<dbReference type="PDBsum" id="6VYT"/>
<dbReference type="PDBsum" id="6VYU"/>
<dbReference type="PDBsum" id="6VYW"/>
<dbReference type="PDBsum" id="6VYX"/>
<dbReference type="PDBsum" id="6VYY"/>
<dbReference type="PDBsum" id="6VYZ"/>
<dbReference type="PDBsum" id="6VZ2"/>
<dbReference type="PDBsum" id="6VZ3"/>
<dbReference type="PDBsum" id="6VZ5"/>
<dbReference type="PDBsum" id="6VZ7"/>
<dbReference type="PDBsum" id="6VZJ"/>
<dbReference type="PDBsum" id="6W6K"/>
<dbReference type="PDBsum" id="6W77"/>
<dbReference type="PDBsum" id="6W7M"/>
<dbReference type="PDBsum" id="6W7N"/>
<dbReference type="PDBsum" id="6W7W"/>
<dbReference type="PDBsum" id="6WD0"/>
<dbReference type="PDBsum" id="6WD1"/>
<dbReference type="PDBsum" id="6WD2"/>
<dbReference type="PDBsum" id="6WD3"/>
<dbReference type="PDBsum" id="6WD4"/>
<dbReference type="PDBsum" id="6WD5"/>
<dbReference type="PDBsum" id="6WD6"/>
<dbReference type="PDBsum" id="6WD7"/>
<dbReference type="PDBsum" id="6WD8"/>
<dbReference type="PDBsum" id="6WD9"/>
<dbReference type="PDBsum" id="6WDA"/>
<dbReference type="PDBsum" id="6WDB"/>
<dbReference type="PDBsum" id="6WDC"/>
<dbReference type="PDBsum" id="6WDD"/>
<dbReference type="PDBsum" id="6WDE"/>
<dbReference type="PDBsum" id="6WDF"/>
<dbReference type="PDBsum" id="6WDG"/>
<dbReference type="PDBsum" id="6WDH"/>
<dbReference type="PDBsum" id="6WDI"/>
<dbReference type="PDBsum" id="6WDJ"/>
<dbReference type="PDBsum" id="6WDK"/>
<dbReference type="PDBsum" id="6WDL"/>
<dbReference type="PDBsum" id="6WDM"/>
<dbReference type="PDBsum" id="6WNV"/>
<dbReference type="PDBsum" id="6WNW"/>
<dbReference type="PDBsum" id="6X6T"/>
<dbReference type="PDBsum" id="6X7F"/>
<dbReference type="PDBsum" id="6X7K"/>
<dbReference type="PDBsum" id="6X9Q"/>
<dbReference type="PDBsum" id="6XDQ"/>
<dbReference type="PDBsum" id="6XDR"/>
<dbReference type="PDBsum" id="6XE0"/>
<dbReference type="PDBsum" id="6XGF"/>
<dbReference type="PDBsum" id="6XII"/>
<dbReference type="PDBsum" id="6XIJ"/>
<dbReference type="PDBsum" id="6XZA"/>
<dbReference type="PDBsum" id="6XZB"/>
<dbReference type="PDBsum" id="6Y69"/>
<dbReference type="PDBsum" id="6ZTJ"/>
<dbReference type="PDBsum" id="6ZTL"/>
<dbReference type="PDBsum" id="6ZTM"/>
<dbReference type="PDBsum" id="6ZTN"/>
<dbReference type="PDBsum" id="6ZTO"/>
<dbReference type="PDBsum" id="6ZTP"/>
<dbReference type="PDBsum" id="6ZU1"/>
<dbReference type="PDBsum" id="7ABZ"/>
<dbReference type="PDBsum" id="7AC7"/>
<dbReference type="PDBsum" id="7ACJ"/>
<dbReference type="PDBsum" id="7ACR"/>
<dbReference type="PDBsum" id="7AFI"/>
<dbReference type="PDBsum" id="7AFL"/>
<dbReference type="PDBsum" id="7AFO"/>
<dbReference type="PDBsum" id="7B5K"/>
<dbReference type="PDBsum" id="7BOD"/>
<dbReference type="PDBsum" id="7BOE"/>
<dbReference type="PDBsum" id="7BOF"/>
<dbReference type="PDBsum" id="7BOG"/>
<dbReference type="PDBsum" id="7BOH"/>
<dbReference type="PDBsum" id="7BOI"/>
<dbReference type="PDBsum" id="7D6Z"/>
<dbReference type="PDBsum" id="7D80"/>
<dbReference type="PDBsum" id="7JSS"/>
<dbReference type="PDBsum" id="7JSW"/>
<dbReference type="PDBsum" id="7JSZ"/>
<dbReference type="PDBsum" id="7JT1"/>
<dbReference type="PDBsum" id="7JT2"/>
<dbReference type="PDBsum" id="7JT3"/>
<dbReference type="PDBsum" id="7K00"/>
<dbReference type="PDBsum" id="7K50"/>
<dbReference type="PDBsum" id="7K51"/>
<dbReference type="PDBsum" id="7K52"/>
<dbReference type="PDBsum" id="7K53"/>
<dbReference type="PDBsum" id="7K54"/>
<dbReference type="PDBsum" id="7K55"/>
<dbReference type="PDBsum" id="7LV0"/>
<dbReference type="PDBsum" id="7M5D"/>
<dbReference type="PDBsum" id="7N1P"/>
<dbReference type="PDBsum" id="7N2C"/>
<dbReference type="PDBsum" id="7N2U"/>
<dbReference type="PDBsum" id="7N2V"/>
<dbReference type="PDBsum" id="7N30"/>
<dbReference type="PDBsum" id="7N31"/>
<dbReference type="PDBsum" id="7NAR"/>
<dbReference type="PDBsum" id="7NAS"/>
<dbReference type="PDBsum" id="7NAT"/>
<dbReference type="PDBsum" id="7NAU"/>
<dbReference type="PDBsum" id="7NAV"/>
<dbReference type="PDBsum" id="7NAX"/>
<dbReference type="PDBsum" id="7NBU"/>
<dbReference type="PDBsum" id="7O19"/>
<dbReference type="PDBsum" id="7O1A"/>
<dbReference type="PDBsum" id="7O1C"/>
<dbReference type="PDBsum" id="7O5H"/>
<dbReference type="PDBsum" id="7OE0"/>
<dbReference type="PDBsum" id="7OE1"/>
<dbReference type="PDBsum" id="7OI0"/>
<dbReference type="PDBsum" id="7OIZ"/>
<dbReference type="PDBsum" id="7OJ0"/>
<dbReference type="PDBsum" id="7P3K"/>
<dbReference type="PDBsum" id="7PJV"/>
<dbReference type="PDBsum" id="7PJY"/>
<dbReference type="PDBsum" id="7QG8"/>
<dbReference type="PDBsum" id="7QGN"/>
<dbReference type="PDBsum" id="7QGR"/>
<dbReference type="PDBsum" id="7S1G"/>
<dbReference type="PDBsum" id="7S1H"/>
<dbReference type="PDBsum" id="7S1I"/>
<dbReference type="PDBsum" id="7S1J"/>
<dbReference type="PDBsum" id="7S1K"/>
<dbReference type="PDBsum" id="7SA4"/>
<dbReference type="PDBsum" id="7SS9"/>
<dbReference type="PDBsum" id="7SSD"/>
<dbReference type="PDBsum" id="7SSL"/>
<dbReference type="PDBsum" id="7SSN"/>
<dbReference type="PDBsum" id="7SSO"/>
<dbReference type="PDBsum" id="7SSW"/>
<dbReference type="PDBsum" id="7ST2"/>
<dbReference type="PDBsum" id="7ST6"/>
<dbReference type="PDBsum" id="7ST7"/>
<dbReference type="PDBsum" id="7TOS"/>
<dbReference type="PDBsum" id="7UG7"/>
<dbReference type="PDBsum" id="7UPH"/>
<dbReference type="PDBsum" id="7Y7C"/>
<dbReference type="PDBsum" id="7Y7D"/>
<dbReference type="PDBsum" id="7Y7E"/>
<dbReference type="PDBsum" id="7Y7F"/>
<dbReference type="PDBsum" id="7Y7G"/>
<dbReference type="PDBsum" id="7Y7H"/>
<dbReference type="PDBsum" id="7ZTA"/>
<dbReference type="PDBsum" id="8A3L"/>
<dbReference type="PDBsum" id="8AKN"/>
<dbReference type="PDBsum" id="8AM9"/>
<dbReference type="PDBsum" id="8AYE"/>
<dbReference type="PDBsum" id="8B0X"/>
<dbReference type="PDBsum" id="8B7Y"/>
<dbReference type="PDBsum" id="8BF7"/>
<dbReference type="PDBsum" id="8BGE"/>
<dbReference type="PDBsum" id="8BGH"/>
<dbReference type="PDBsum" id="8BH4"/>
<dbReference type="PDBsum" id="8BHJ"/>
<dbReference type="PDBsum" id="8BHL"/>
<dbReference type="PDBsum" id="8BHN"/>
<dbReference type="PDBsum" id="8BHP"/>
<dbReference type="PDBsum" id="8BIL"/>
<dbReference type="PDBsum" id="8BIM"/>
<dbReference type="PDBsum" id="8CAI"/>
<dbReference type="PDBsum" id="8CEP"/>
<dbReference type="PDBsum" id="8CGJ"/>
<dbReference type="PDBsum" id="8CGR"/>
<dbReference type="PDBsum" id="8CGU"/>
<dbReference type="PDBsum" id="8EIU"/>
<dbReference type="PDBsum" id="8EKC"/>
<dbReference type="PDBsum" id="8EMM"/>
<dbReference type="PDBsum" id="8EYQ"/>
<dbReference type="PDBsum" id="8EYT"/>
<dbReference type="PDBsum" id="8FIZ"/>
<dbReference type="PDBsum" id="8FTO"/>
<dbReference type="PDBsum" id="8FZD"/>
<dbReference type="PDBsum" id="8FZE"/>
<dbReference type="PDBsum" id="8FZF"/>
<dbReference type="PDBsum" id="8FZG"/>
<dbReference type="PDBsum" id="8FZH"/>
<dbReference type="PDBsum" id="8FZI"/>
<dbReference type="PDBsum" id="8FZJ"/>
<dbReference type="PDBsum" id="8G2U"/>
<dbReference type="PDBsum" id="8G31"/>
<dbReference type="PDBsum" id="8G34"/>
<dbReference type="PDBsum" id="8G38"/>
<dbReference type="PDBsum" id="8G6W"/>
<dbReference type="PDBsum" id="8G7P"/>
<dbReference type="PDBsum" id="8G7Q"/>
<dbReference type="PDBsum" id="8G7R"/>
<dbReference type="PDBsum" id="8G7S"/>
<dbReference type="PDBsum" id="8GHU"/>
<dbReference type="PDBsum" id="8HSP"/>
<dbReference type="PDBsum" id="8HTZ"/>
<dbReference type="PDBsum" id="8HU1"/>
<dbReference type="PDBsum" id="8IFB"/>
<dbReference type="PDBsum" id="8IFC"/>
<dbReference type="PDBsum" id="8JSG"/>
<dbReference type="PDBsum" id="8JSH"/>
<dbReference type="PDBsum" id="8K3O"/>
<dbReference type="PDBsum" id="8K4E"/>
<dbReference type="PDBsum" id="8P16"/>
<dbReference type="PDBsum" id="8P17"/>
<dbReference type="PDBsum" id="8P18"/>
<dbReference type="PDBsum" id="8PEG"/>
<dbReference type="PDBsum" id="8PHJ"/>
<dbReference type="PDBsum" id="8PKL"/>
<dbReference type="PDBsum" id="8PVA"/>
<dbReference type="PDBsum" id="8Q4F"/>
<dbReference type="PDBsum" id="8QK7"/>
<dbReference type="PDBsum" id="8QOA"/>
<dbReference type="PDBsum" id="8R3V"/>
<dbReference type="PDBsum" id="8R6C"/>
<dbReference type="PDBsum" id="8R8M"/>
<dbReference type="PDBsum" id="8RCL"/>
<dbReference type="PDBsum" id="8RCM"/>
<dbReference type="PDBsum" id="8RCS"/>
<dbReference type="PDBsum" id="8RCT"/>
<dbReference type="PDBsum" id="8SYL"/>
<dbReference type="PDBsum" id="8T5D"/>
<dbReference type="PDBsum" id="8T5H"/>
<dbReference type="PDBsum" id="8UPO"/>
<dbReference type="PDBsum" id="8UPR"/>
<dbReference type="PDBsum" id="8UQL"/>
<dbReference type="PDBsum" id="8UQM"/>
<dbReference type="PDBsum" id="8UQP"/>
<dbReference type="PDBsum" id="8UR0"/>
<dbReference type="PDBsum" id="8URH"/>
<dbReference type="PDBsum" id="8URI"/>
<dbReference type="PDBsum" id="8URX"/>
<dbReference type="PDBsum" id="8URY"/>
<dbReference type="PDBsum" id="8VS9"/>
<dbReference type="PDBsum" id="8VSA"/>
<dbReference type="PDBsum" id="8YUO"/>
<dbReference type="PDBsum" id="8YUP"/>
<dbReference type="PDBsum" id="8YUQ"/>
<dbReference type="PDBsum" id="8YUR"/>
<dbReference type="PDBsum" id="8YUS"/>
<dbReference type="PDBsum" id="9DUK"/>
<dbReference type="PDBsum" id="9DUL"/>
<dbReference type="PDBsum" id="9FBV"/>
<dbReference type="PDBsum" id="9GFT"/>
<dbReference type="PDBsum" id="9GGR"/>
<dbReference type="PDBsum" id="9GUP"/>
<dbReference type="PDBsum" id="9GUQ"/>
<dbReference type="PDBsum" id="9GUS"/>
<dbReference type="PDBsum" id="9GUT"/>
<dbReference type="PDBsum" id="9GUU"/>
<dbReference type="PDBsum" id="9GUV"/>
<dbReference type="PDBsum" id="9GUW"/>
<dbReference type="PDBsum" id="9GUX"/>
<dbReference type="PDBsum" id="9MOR"/>
<dbReference type="PDBsum" id="9MQ4"/>
<dbReference type="EMDB" id="EMD-0076"/>
<dbReference type="EMDB" id="EMD-0080"/>
<dbReference type="EMDB" id="EMD-0081"/>
<dbReference type="EMDB" id="EMD-0082"/>
<dbReference type="EMDB" id="EMD-0083"/>
<dbReference type="EMDB" id="EMD-0137"/>
<dbReference type="EMDB" id="EMD-0139"/>
<dbReference type="EMDB" id="EMD-0261"/>
<dbReference type="EMDB" id="EMD-10353"/>
<dbReference type="EMDB" id="EMD-10453"/>
<dbReference type="EMDB" id="EMD-10458"/>
<dbReference type="EMDB" id="EMD-10656"/>
<dbReference type="EMDB" id="EMD-10657"/>
<dbReference type="EMDB" id="EMD-10705"/>
<dbReference type="EMDB" id="EMD-11419"/>
<dbReference type="EMDB" id="EMD-11710"/>
<dbReference type="EMDB" id="EMD-11713"/>
<dbReference type="EMDB" id="EMD-11717"/>
<dbReference type="EMDB" id="EMD-11718"/>
<dbReference type="EMDB" id="EMD-12035"/>
<dbReference type="EMDB" id="EMD-12239"/>
<dbReference type="EMDB" id="EMD-12240"/>
<dbReference type="EMDB" id="EMD-12241"/>
<dbReference type="EMDB" id="EMD-12242"/>
<dbReference type="EMDB" id="EMD-12243"/>
<dbReference type="EMDB" id="EMD-12244"/>
<dbReference type="EMDB" id="EMD-12245"/>
<dbReference type="EMDB" id="EMD-12246"/>
<dbReference type="EMDB" id="EMD-12247"/>
<dbReference type="EMDB" id="EMD-12248"/>
<dbReference type="EMDB" id="EMD-12249"/>
<dbReference type="EMDB" id="EMD-12261"/>
<dbReference type="EMDB" id="EMD-12693"/>
<dbReference type="EMDB" id="EMD-12694"/>
<dbReference type="EMDB" id="EMD-12695"/>
<dbReference type="EMDB" id="EMD-13180"/>
<dbReference type="EMDB" id="EMD-13461"/>
<dbReference type="EMDB" id="EMD-13464"/>
<dbReference type="EMDB" id="EMD-13952"/>
<dbReference type="EMDB" id="EMD-13958"/>
<dbReference type="EMDB" id="EMD-14956"/>
<dbReference type="EMDB" id="EMD-15116"/>
<dbReference type="EMDB" id="EMD-15488"/>
<dbReference type="EMDB" id="EMD-15523"/>
<dbReference type="EMDB" id="EMD-15712"/>
<dbReference type="EMDB" id="EMD-15793"/>
<dbReference type="EMDB" id="EMD-15905"/>
<dbReference type="EMDB" id="EMD-16015"/>
<dbReference type="EMDB" id="EMD-16029"/>
<dbReference type="EMDB" id="EMD-16031"/>
<dbReference type="EMDB" id="EMD-16047"/>
<dbReference type="EMDB" id="EMD-16057"/>
<dbReference type="EMDB" id="EMD-16059"/>
<dbReference type="EMDB" id="EMD-16062"/>
<dbReference type="EMDB" id="EMD-16065"/>
<dbReference type="EMDB" id="EMD-16081"/>
<dbReference type="EMDB" id="EMD-16082"/>
<dbReference type="EMDB" id="EMD-16526"/>
<dbReference type="EMDB" id="EMD-16612"/>
<dbReference type="EMDB" id="EMD-16645"/>
<dbReference type="EMDB" id="EMD-16650"/>
<dbReference type="EMDB" id="EMD-16651"/>
<dbReference type="EMDB" id="EMD-17346"/>
<dbReference type="EMDB" id="EMD-17347"/>
<dbReference type="EMDB" id="EMD-17348"/>
<dbReference type="EMDB" id="EMD-17631"/>
<dbReference type="EMDB" id="EMD-17667"/>
<dbReference type="EMDB" id="EMD-17743"/>
<dbReference type="EMDB" id="EMD-17959"/>
<dbReference type="EMDB" id="EMD-18145"/>
<dbReference type="EMDB" id="EMD-18458"/>
<dbReference type="EMDB" id="EMD-18534"/>
<dbReference type="EMDB" id="EMD-18875"/>
<dbReference type="EMDB" id="EMD-18950"/>
<dbReference type="EMDB" id="EMD-19004"/>
<dbReference type="EMDB" id="EMD-19054"/>
<dbReference type="EMDB" id="EMD-19055"/>
<dbReference type="EMDB" id="EMD-19058"/>
<dbReference type="EMDB" id="EMD-19059"/>
<dbReference type="EMDB" id="EMD-20048"/>
<dbReference type="EMDB" id="EMD-20052"/>
<dbReference type="EMDB" id="EMD-21420"/>
<dbReference type="EMDB" id="EMD-21421"/>
<dbReference type="EMDB" id="EMD-21422"/>
<dbReference type="EMDB" id="EMD-21558"/>
<dbReference type="EMDB" id="EMD-21569"/>
<dbReference type="EMDB" id="EMD-21571"/>
<dbReference type="EMDB" id="EMD-21572"/>
<dbReference type="EMDB" id="EMD-21573"/>
<dbReference type="EMDB" id="EMD-21625"/>
<dbReference type="EMDB" id="EMD-21630"/>
<dbReference type="EMDB" id="EMD-21631"/>
<dbReference type="EMDB" id="EMD-21632"/>
<dbReference type="EMDB" id="EMD-21633"/>
<dbReference type="EMDB" id="EMD-21634"/>
<dbReference type="EMDB" id="EMD-21635"/>
<dbReference type="EMDB" id="EMD-21636"/>
<dbReference type="EMDB" id="EMD-21637"/>
<dbReference type="EMDB" id="EMD-21638"/>
<dbReference type="EMDB" id="EMD-21639"/>
<dbReference type="EMDB" id="EMD-21640"/>
<dbReference type="EMDB" id="EMD-21641"/>
<dbReference type="EMDB" id="EMD-21857"/>
<dbReference type="EMDB" id="EMD-21858"/>
<dbReference type="EMDB" id="EMD-22143"/>
<dbReference type="EMDB" id="EMD-22459"/>
<dbReference type="EMDB" id="EMD-22461"/>
<dbReference type="EMDB" id="EMD-22464"/>
<dbReference type="EMDB" id="EMD-22466"/>
<dbReference type="EMDB" id="EMD-22469"/>
<dbReference type="EMDB" id="EMD-22472"/>
<dbReference type="EMDB" id="EMD-22669"/>
<dbReference type="EMDB" id="EMD-22670"/>
<dbReference type="EMDB" id="EMD-22671"/>
<dbReference type="EMDB" id="EMD-22672"/>
<dbReference type="EMDB" id="EMD-22673"/>
<dbReference type="EMDB" id="EMD-22674"/>
<dbReference type="EMDB" id="EMD-23528"/>
<dbReference type="EMDB" id="EMD-24120"/>
<dbReference type="EMDB" id="EMD-24132"/>
<dbReference type="EMDB" id="EMD-24133"/>
<dbReference type="EMDB" id="EMD-24134"/>
<dbReference type="EMDB" id="EMD-24135"/>
<dbReference type="EMDB" id="EMD-24136"/>
<dbReference type="EMDB" id="EMD-24803"/>
<dbReference type="EMDB" id="EMD-25405"/>
<dbReference type="EMDB" id="EMD-25407"/>
<dbReference type="EMDB" id="EMD-25409"/>
<dbReference type="EMDB" id="EMD-25410"/>
<dbReference type="EMDB" id="EMD-25411"/>
<dbReference type="EMDB" id="EMD-25415"/>
<dbReference type="EMDB" id="EMD-25418"/>
<dbReference type="EMDB" id="EMD-25420"/>
<dbReference type="EMDB" id="EMD-25421"/>
<dbReference type="EMDB" id="EMD-30598"/>
<dbReference type="EMDB" id="EMD-30611"/>
<dbReference type="EMDB" id="EMD-33660"/>
<dbReference type="EMDB" id="EMD-33661"/>
<dbReference type="EMDB" id="EMD-33662"/>
<dbReference type="EMDB" id="EMD-33663"/>
<dbReference type="EMDB" id="EMD-33664"/>
<dbReference type="EMDB" id="EMD-33665"/>
<dbReference type="EMDB" id="EMD-3489"/>
<dbReference type="EMDB" id="EMD-3490"/>
<dbReference type="EMDB" id="EMD-3492"/>
<dbReference type="EMDB" id="EMD-3493"/>
<dbReference type="EMDB" id="EMD-35001"/>
<dbReference type="EMDB" id="EMD-35020"/>
<dbReference type="EMDB" id="EMD-35022"/>
<dbReference type="EMDB" id="EMD-3508"/>
<dbReference type="EMDB" id="EMD-35411"/>
<dbReference type="EMDB" id="EMD-35412"/>
<dbReference type="EMDB" id="EMD-3580"/>
<dbReference type="EMDB" id="EMD-3661"/>
<dbReference type="EMDB" id="EMD-36619"/>
<dbReference type="EMDB" id="EMD-3662"/>
<dbReference type="EMDB" id="EMD-36620"/>
<dbReference type="EMDB" id="EMD-3663"/>
<dbReference type="EMDB" id="EMD-36854"/>
<dbReference type="EMDB" id="EMD-36883"/>
<dbReference type="EMDB" id="EMD-3713"/>
<dbReference type="EMDB" id="EMD-3730"/>
<dbReference type="EMDB" id="EMD-3898"/>
<dbReference type="EMDB" id="EMD-3899"/>
<dbReference type="EMDB" id="EMD-3903"/>
<dbReference type="EMDB" id="EMD-39577"/>
<dbReference type="EMDB" id="EMD-39578"/>
<dbReference type="EMDB" id="EMD-39579"/>
<dbReference type="EMDB" id="EMD-39580"/>
<dbReference type="EMDB" id="EMD-39581"/>
<dbReference type="EMDB" id="EMD-4001"/>
<dbReference type="EMDB" id="EMD-4121"/>
<dbReference type="EMDB" id="EMD-4122"/>
<dbReference type="EMDB" id="EMD-4123"/>
<dbReference type="EMDB" id="EMD-4124"/>
<dbReference type="EMDB" id="EMD-4125"/>
<dbReference type="EMDB" id="EMD-4126"/>
<dbReference type="EMDB" id="EMD-4477"/>
<dbReference type="EMDB" id="EMD-4478"/>
<dbReference type="EMDB" id="EMD-50296"/>
<dbReference type="EMDB" id="EMD-51318"/>
<dbReference type="EMDB" id="EMD-51340"/>
<dbReference type="EMDB" id="EMD-51615"/>
<dbReference type="EMDB" id="EMD-51616"/>
<dbReference type="EMDB" id="EMD-51618"/>
<dbReference type="EMDB" id="EMD-51619"/>
<dbReference type="EMDB" id="EMD-51620"/>
<dbReference type="EMDB" id="EMD-51621"/>
<dbReference type="EMDB" id="EMD-51622"/>
<dbReference type="EMDB" id="EMD-51623"/>
<dbReference type="EMDB" id="EMD-6667"/>
<dbReference type="EMDB" id="EMD-7289"/>
<dbReference type="EMDB" id="EMD-7341"/>
<dbReference type="EMDB" id="EMD-8107"/>
<dbReference type="EMDB" id="EMD-8175"/>
<dbReference type="EMDB" id="EMD-8176"/>
<dbReference type="EMDB" id="EMD-8237"/>
<dbReference type="EMDB" id="EMD-8238"/>
<dbReference type="EMDB" id="EMD-8279"/>
<dbReference type="EMDB" id="EMD-8280"/>
<dbReference type="EMDB" id="EMD-8281"/>
<dbReference type="EMDB" id="EMD-8282"/>
<dbReference type="EMDB" id="EMD-8505"/>
<dbReference type="EMDB" id="EMD-8615"/>
<dbReference type="EMDB" id="EMD-8616"/>
<dbReference type="EMDB" id="EMD-8617"/>
<dbReference type="EMDB" id="EMD-8618"/>
<dbReference type="EMDB" id="EMD-8619"/>
<dbReference type="EMDB" id="EMD-8620"/>
<dbReference type="EMDB" id="EMD-8813"/>
<dbReference type="EMDB" id="EMD-8814"/>
<dbReference type="EMDB" id="EMD-8815"/>
<dbReference type="EMDB" id="EMD-8828"/>
<dbReference type="SMR" id="P0A7T3"/>
<dbReference type="BioGRID" id="4259600">
    <property type="interactions" value="13"/>
</dbReference>
<dbReference type="ComplexPortal" id="CPX-3802">
    <property type="entry name" value="30S small ribosomal subunit"/>
</dbReference>
<dbReference type="DIP" id="DIP-47829N"/>
<dbReference type="FunCoup" id="P0A7T3">
    <property type="interactions" value="978"/>
</dbReference>
<dbReference type="IntAct" id="P0A7T3">
    <property type="interactions" value="77"/>
</dbReference>
<dbReference type="STRING" id="511145.b2609"/>
<dbReference type="jPOST" id="P0A7T3"/>
<dbReference type="PaxDb" id="511145-b2609"/>
<dbReference type="EnsemblBacteria" id="AAC75658">
    <property type="protein sequence ID" value="AAC75658"/>
    <property type="gene ID" value="b2609"/>
</dbReference>
<dbReference type="GeneID" id="93774459"/>
<dbReference type="GeneID" id="947103"/>
<dbReference type="KEGG" id="ecj:JW2590"/>
<dbReference type="KEGG" id="eco:b2609"/>
<dbReference type="KEGG" id="ecoc:C3026_14445"/>
<dbReference type="PATRIC" id="fig|1411691.4.peg.4130"/>
<dbReference type="EchoBASE" id="EB0908"/>
<dbReference type="eggNOG" id="COG0228">
    <property type="taxonomic scope" value="Bacteria"/>
</dbReference>
<dbReference type="HOGENOM" id="CLU_100590_5_1_6"/>
<dbReference type="InParanoid" id="P0A7T3"/>
<dbReference type="OMA" id="GFYNPIA"/>
<dbReference type="OrthoDB" id="9807878at2"/>
<dbReference type="PhylomeDB" id="P0A7T3"/>
<dbReference type="BioCyc" id="EcoCyc:EG10915-MONOMER"/>
<dbReference type="BioCyc" id="MetaCyc:EG10915-MONOMER"/>
<dbReference type="EvolutionaryTrace" id="P0A7T3"/>
<dbReference type="PRO" id="PR:P0A7T3"/>
<dbReference type="Proteomes" id="UP000000625">
    <property type="component" value="Chromosome"/>
</dbReference>
<dbReference type="GO" id="GO:0005737">
    <property type="term" value="C:cytoplasm"/>
    <property type="evidence" value="ECO:0000314"/>
    <property type="project" value="ComplexPortal"/>
</dbReference>
<dbReference type="GO" id="GO:0022627">
    <property type="term" value="C:cytosolic small ribosomal subunit"/>
    <property type="evidence" value="ECO:0000314"/>
    <property type="project" value="EcoCyc"/>
</dbReference>
<dbReference type="GO" id="GO:0015935">
    <property type="term" value="C:small ribosomal subunit"/>
    <property type="evidence" value="ECO:0000318"/>
    <property type="project" value="GO_Central"/>
</dbReference>
<dbReference type="GO" id="GO:0004520">
    <property type="term" value="F:DNA endonuclease activity"/>
    <property type="evidence" value="ECO:0000314"/>
    <property type="project" value="EcoCyc"/>
</dbReference>
<dbReference type="GO" id="GO:0000400">
    <property type="term" value="F:four-way junction DNA binding"/>
    <property type="evidence" value="ECO:0000314"/>
    <property type="project" value="EcoCyc"/>
</dbReference>
<dbReference type="GO" id="GO:0003735">
    <property type="term" value="F:structural constituent of ribosome"/>
    <property type="evidence" value="ECO:0000314"/>
    <property type="project" value="CAFA"/>
</dbReference>
<dbReference type="GO" id="GO:0002181">
    <property type="term" value="P:cytoplasmic translation"/>
    <property type="evidence" value="ECO:0000303"/>
    <property type="project" value="ComplexPortal"/>
</dbReference>
<dbReference type="GO" id="GO:0000028">
    <property type="term" value="P:ribosomal small subunit assembly"/>
    <property type="evidence" value="ECO:0000314"/>
    <property type="project" value="EcoCyc"/>
</dbReference>
<dbReference type="FunFam" id="3.30.1320.10:FF:000001">
    <property type="entry name" value="30S ribosomal protein S16"/>
    <property type="match status" value="1"/>
</dbReference>
<dbReference type="Gene3D" id="3.30.1320.10">
    <property type="match status" value="1"/>
</dbReference>
<dbReference type="HAMAP" id="MF_00385">
    <property type="entry name" value="Ribosomal_bS16"/>
    <property type="match status" value="1"/>
</dbReference>
<dbReference type="InterPro" id="IPR000307">
    <property type="entry name" value="Ribosomal_bS16"/>
</dbReference>
<dbReference type="InterPro" id="IPR020592">
    <property type="entry name" value="Ribosomal_bS16_CS"/>
</dbReference>
<dbReference type="InterPro" id="IPR023803">
    <property type="entry name" value="Ribosomal_bS16_dom_sf"/>
</dbReference>
<dbReference type="NCBIfam" id="TIGR00002">
    <property type="entry name" value="S16"/>
    <property type="match status" value="1"/>
</dbReference>
<dbReference type="PANTHER" id="PTHR12919">
    <property type="entry name" value="30S RIBOSOMAL PROTEIN S16"/>
    <property type="match status" value="1"/>
</dbReference>
<dbReference type="PANTHER" id="PTHR12919:SF20">
    <property type="entry name" value="SMALL RIBOSOMAL SUBUNIT PROTEIN BS16M"/>
    <property type="match status" value="1"/>
</dbReference>
<dbReference type="Pfam" id="PF00886">
    <property type="entry name" value="Ribosomal_S16"/>
    <property type="match status" value="1"/>
</dbReference>
<dbReference type="SUPFAM" id="SSF54565">
    <property type="entry name" value="Ribosomal protein S16"/>
    <property type="match status" value="1"/>
</dbReference>
<dbReference type="PROSITE" id="PS00732">
    <property type="entry name" value="RIBOSOMAL_S16"/>
    <property type="match status" value="1"/>
</dbReference>
<protein>
    <recommendedName>
        <fullName evidence="1 13">Small ribosomal subunit protein bS16</fullName>
    </recommendedName>
    <alternativeName>
        <fullName>30S ribosomal protein S16</fullName>
    </alternativeName>
</protein>
<comment type="function">
    <text evidence="12">In addition to being a ribosomal protein, S16 also has a cation-dependent endonuclease activity.</text>
</comment>
<comment type="function">
    <text evidence="3">In-frame fusions with the ribosome maturation factor rimM suppress mutations in the latter (probably due to increased rimM expression) and are found in translationally active 70S ribosomes.</text>
</comment>
<comment type="subunit">
    <text evidence="2 4 5 6 7 8 9 10">Part of the 30S ribosomal subunit (PubMed:10094780, PubMed:12244297, PubMed:12809609, PubMed:16272117, PubMed:27906160, PubMed:27906161, PubMed:27934701, PubMed:336510).</text>
</comment>
<comment type="induction">
    <text evidence="11">Part of the rpsP-rimM-trmD-rplS operon.</text>
</comment>
<comment type="mass spectrometry"/>
<comment type="similarity">
    <text evidence="1">Belongs to the bacterial ribosomal protein bS16 family.</text>
</comment>
<sequence>MVTIRLARHGAKKRPFYQVVVADSRNARNGRFIERVGFFNPIASEKEEGTRLDLDRIAHWVGQGATISDRVAALIKEVNKAA</sequence>
<evidence type="ECO:0000255" key="1">
    <source>
        <dbReference type="HAMAP-Rule" id="MF_00385"/>
    </source>
</evidence>
<evidence type="ECO:0000269" key="2">
    <source>
    </source>
</evidence>
<evidence type="ECO:0000269" key="3">
    <source>
    </source>
</evidence>
<evidence type="ECO:0000269" key="4">
    <source>
    </source>
</evidence>
<evidence type="ECO:0000269" key="5">
    <source>
    </source>
</evidence>
<evidence type="ECO:0000269" key="6">
    <source>
    </source>
</evidence>
<evidence type="ECO:0000269" key="7">
    <source>
    </source>
</evidence>
<evidence type="ECO:0000269" key="8">
    <source>
    </source>
</evidence>
<evidence type="ECO:0000269" key="9">
    <source>
    </source>
</evidence>
<evidence type="ECO:0000269" key="10">
    <source>
    </source>
</evidence>
<evidence type="ECO:0000269" key="11">
    <source>
    </source>
</evidence>
<evidence type="ECO:0000269" key="12">
    <source>
    </source>
</evidence>
<evidence type="ECO:0000303" key="13">
    <source>
    </source>
</evidence>
<evidence type="ECO:0007829" key="14">
    <source>
        <dbReference type="PDB" id="6W7N"/>
    </source>
</evidence>
<evidence type="ECO:0007829" key="15">
    <source>
        <dbReference type="PDB" id="7BOG"/>
    </source>
</evidence>
<evidence type="ECO:0007829" key="16">
    <source>
        <dbReference type="PDB" id="8CEP"/>
    </source>
</evidence>
<evidence type="ECO:0007829" key="17">
    <source>
        <dbReference type="PDB" id="8CGJ"/>
    </source>
</evidence>
<evidence type="ECO:0007829" key="18">
    <source>
        <dbReference type="PDB" id="8K4E"/>
    </source>
</evidence>